<evidence type="ECO:0000250" key="1">
    <source>
        <dbReference type="UniProtKB" id="P49185"/>
    </source>
</evidence>
<evidence type="ECO:0000250" key="2">
    <source>
        <dbReference type="UniProtKB" id="Q91Y86"/>
    </source>
</evidence>
<evidence type="ECO:0000255" key="3">
    <source>
        <dbReference type="PROSITE-ProRule" id="PRU00159"/>
    </source>
</evidence>
<evidence type="ECO:0000255" key="4">
    <source>
        <dbReference type="PROSITE-ProRule" id="PRU10027"/>
    </source>
</evidence>
<evidence type="ECO:0000256" key="5">
    <source>
        <dbReference type="SAM" id="MobiDB-lite"/>
    </source>
</evidence>
<evidence type="ECO:0000269" key="6">
    <source>
    </source>
</evidence>
<evidence type="ECO:0000269" key="7">
    <source>
    </source>
</evidence>
<evidence type="ECO:0000269" key="8">
    <source>
    </source>
</evidence>
<evidence type="ECO:0000269" key="9">
    <source>
    </source>
</evidence>
<evidence type="ECO:0000269" key="10">
    <source>
    </source>
</evidence>
<evidence type="ECO:0000269" key="11">
    <source>
    </source>
</evidence>
<evidence type="ECO:0000269" key="12">
    <source>
    </source>
</evidence>
<evidence type="ECO:0000269" key="13">
    <source>
    </source>
</evidence>
<evidence type="ECO:0000269" key="14">
    <source>
    </source>
</evidence>
<evidence type="ECO:0000269" key="15">
    <source>
    </source>
</evidence>
<evidence type="ECO:0000269" key="16">
    <source>
    </source>
</evidence>
<evidence type="ECO:0000269" key="17">
    <source>
    </source>
</evidence>
<evidence type="ECO:0000269" key="18">
    <source>
    </source>
</evidence>
<evidence type="ECO:0000269" key="19">
    <source>
    </source>
</evidence>
<evidence type="ECO:0000269" key="20">
    <source>
    </source>
</evidence>
<evidence type="ECO:0000269" key="21">
    <source>
    </source>
</evidence>
<evidence type="ECO:0000269" key="22">
    <source>
    </source>
</evidence>
<evidence type="ECO:0000269" key="23">
    <source>
    </source>
</evidence>
<evidence type="ECO:0000269" key="24">
    <source>
    </source>
</evidence>
<evidence type="ECO:0000269" key="25">
    <source>
    </source>
</evidence>
<evidence type="ECO:0000269" key="26">
    <source>
    </source>
</evidence>
<evidence type="ECO:0000269" key="27">
    <source>
    </source>
</evidence>
<evidence type="ECO:0000269" key="28">
    <source>
    </source>
</evidence>
<evidence type="ECO:0000269" key="29">
    <source>
    </source>
</evidence>
<evidence type="ECO:0000269" key="30">
    <source>
    </source>
</evidence>
<evidence type="ECO:0000269" key="31">
    <source>
    </source>
</evidence>
<evidence type="ECO:0000269" key="32">
    <source>
    </source>
</evidence>
<evidence type="ECO:0000269" key="33">
    <source>
    </source>
</evidence>
<evidence type="ECO:0000269" key="34">
    <source>
    </source>
</evidence>
<evidence type="ECO:0000269" key="35">
    <source>
    </source>
</evidence>
<evidence type="ECO:0000303" key="36">
    <source>
    </source>
</evidence>
<evidence type="ECO:0000303" key="37">
    <source>
    </source>
</evidence>
<evidence type="ECO:0000303" key="38">
    <source>
    </source>
</evidence>
<evidence type="ECO:0000303" key="39">
    <source ref="3"/>
</evidence>
<evidence type="ECO:0000305" key="40"/>
<evidence type="ECO:0007744" key="41">
    <source>
    </source>
</evidence>
<evidence type="ECO:0007744" key="42">
    <source>
    </source>
</evidence>
<evidence type="ECO:0007829" key="43">
    <source>
        <dbReference type="PDB" id="2G01"/>
    </source>
</evidence>
<evidence type="ECO:0007829" key="44">
    <source>
        <dbReference type="PDB" id="2GMX"/>
    </source>
</evidence>
<evidence type="ECO:0007829" key="45">
    <source>
        <dbReference type="PDB" id="2H96"/>
    </source>
</evidence>
<evidence type="ECO:0007829" key="46">
    <source>
        <dbReference type="PDB" id="2NO3"/>
    </source>
</evidence>
<evidence type="ECO:0007829" key="47">
    <source>
        <dbReference type="PDB" id="2XRW"/>
    </source>
</evidence>
<evidence type="ECO:0007829" key="48">
    <source>
        <dbReference type="PDB" id="3ELJ"/>
    </source>
</evidence>
<evidence type="ECO:0007829" key="49">
    <source>
        <dbReference type="PDB" id="3O2M"/>
    </source>
</evidence>
<evidence type="ECO:0007829" key="50">
    <source>
        <dbReference type="PDB" id="3PZE"/>
    </source>
</evidence>
<evidence type="ECO:0007829" key="51">
    <source>
        <dbReference type="PDB" id="3VUM"/>
    </source>
</evidence>
<evidence type="ECO:0007829" key="52">
    <source>
        <dbReference type="PDB" id="4QTD"/>
    </source>
</evidence>
<protein>
    <recommendedName>
        <fullName>Mitogen-activated protein kinase 8</fullName>
        <shortName>MAP kinase 8</shortName>
        <shortName>MAPK 8</shortName>
        <ecNumber evidence="6 7 8 12 14 17 35">2.7.11.24</ecNumber>
    </recommendedName>
    <alternativeName>
        <fullName>JNK-46</fullName>
    </alternativeName>
    <alternativeName>
        <fullName>Stress-activated protein kinase 1c</fullName>
        <shortName>SAPK1c</shortName>
    </alternativeName>
    <alternativeName>
        <fullName>Stress-activated protein kinase JNK1</fullName>
    </alternativeName>
    <alternativeName>
        <fullName>c-Jun N-terminal kinase 1</fullName>
    </alternativeName>
</protein>
<feature type="chain" id="PRO_0000186262" description="Mitogen-activated protein kinase 8">
    <location>
        <begin position="1"/>
        <end position="427"/>
    </location>
</feature>
<feature type="domain" description="Protein kinase" evidence="3">
    <location>
        <begin position="26"/>
        <end position="321"/>
    </location>
</feature>
<feature type="region of interest" description="Disordered" evidence="5">
    <location>
        <begin position="371"/>
        <end position="427"/>
    </location>
</feature>
<feature type="short sequence motif" description="TXY">
    <location>
        <begin position="183"/>
        <end position="185"/>
    </location>
</feature>
<feature type="compositionally biased region" description="Low complexity" evidence="5">
    <location>
        <begin position="387"/>
        <end position="403"/>
    </location>
</feature>
<feature type="compositionally biased region" description="Polar residues" evidence="5">
    <location>
        <begin position="404"/>
        <end position="415"/>
    </location>
</feature>
<feature type="active site" description="Proton acceptor" evidence="3 4">
    <location>
        <position position="151"/>
    </location>
</feature>
<feature type="binding site" evidence="3">
    <location>
        <begin position="32"/>
        <end position="40"/>
    </location>
    <ligand>
        <name>ATP</name>
        <dbReference type="ChEBI" id="CHEBI:30616"/>
    </ligand>
</feature>
<feature type="binding site" evidence="3">
    <location>
        <position position="55"/>
    </location>
    <ligand>
        <name>ATP</name>
        <dbReference type="ChEBI" id="CHEBI:30616"/>
    </ligand>
</feature>
<feature type="modified residue" description="S-nitrosocysteine" evidence="1">
    <location>
        <position position="116"/>
    </location>
</feature>
<feature type="modified residue" description="Phosphothreonine; by MAP2K7" evidence="8">
    <location>
        <position position="183"/>
    </location>
</feature>
<feature type="modified residue" description="Phosphotyrosine; by MAP2K4" evidence="8">
    <location>
        <position position="185"/>
    </location>
</feature>
<feature type="modified residue" description="Phosphoserine" evidence="2">
    <location>
        <position position="377"/>
    </location>
</feature>
<feature type="splice variant" id="VSP_054554" description="In isoform 5." evidence="39">
    <location>
        <begin position="206"/>
        <end position="281"/>
    </location>
</feature>
<feature type="splice variant" id="VSP_004831" description="In isoform 3 and isoform 4." evidence="36">
    <original>L</original>
    <variation>I</variation>
    <location>
        <position position="208"/>
    </location>
</feature>
<feature type="splice variant" id="VSP_004832" description="In isoform 3 and isoform 4." evidence="36">
    <original>VCHKILFPGRDY</original>
    <variation>IKGGVLFPGTDH</variation>
    <location>
        <begin position="219"/>
        <end position="230"/>
    </location>
</feature>
<feature type="splice variant" id="VSP_004833" description="In isoform 1, isoform 3 and isoform 5." evidence="36 37 39">
    <original>GAAVINGSQHPSSSSSVNDVSSMSTDPTLASDTDSSLEAAAGPLGCCR</original>
    <variation>AQVQQ</variation>
    <location>
        <begin position="380"/>
        <end position="427"/>
    </location>
</feature>
<feature type="sequence variant" id="VAR_042258" description="In a renal clear cell carcinoma sample; somatic mutation." evidence="15">
    <original>G</original>
    <variation>S</variation>
    <location>
        <position position="171"/>
    </location>
</feature>
<feature type="sequence variant" id="VAR_042259" description="In a glioblastoma multiforme sample; somatic mutation; dbSNP:rs2043278229." evidence="15">
    <original>G</original>
    <variation>R</variation>
    <location>
        <position position="177"/>
    </location>
</feature>
<feature type="sequence variant" id="VAR_050592" description="In dbSNP:rs45483593.">
    <original>E</original>
    <variation>K</variation>
    <location>
        <position position="365"/>
    </location>
</feature>
<feature type="mutagenesis site" description="Abolished protein kinase activity." evidence="29 31">
    <original>K</original>
    <variation>D</variation>
    <location>
        <position position="55"/>
    </location>
</feature>
<feature type="mutagenesis site" description="Phosphorylation blocked." evidence="34">
    <original>T</original>
    <variation>A</variation>
    <location>
        <position position="183"/>
    </location>
</feature>
<feature type="mutagenesis site" description="Phosphorylation blocked." evidence="34">
    <original>Y</original>
    <variation>F</variation>
    <location>
        <position position="185"/>
    </location>
</feature>
<feature type="helix" evidence="47">
    <location>
        <begin position="4"/>
        <end position="9"/>
    </location>
</feature>
<feature type="strand" evidence="47">
    <location>
        <begin position="10"/>
        <end position="15"/>
    </location>
</feature>
<feature type="strand" evidence="47">
    <location>
        <begin position="18"/>
        <end position="23"/>
    </location>
</feature>
<feature type="strand" evidence="47">
    <location>
        <begin position="26"/>
        <end position="34"/>
    </location>
</feature>
<feature type="strand" evidence="47">
    <location>
        <begin position="36"/>
        <end position="45"/>
    </location>
</feature>
<feature type="turn" evidence="47">
    <location>
        <begin position="46"/>
        <end position="49"/>
    </location>
</feature>
<feature type="strand" evidence="47">
    <location>
        <begin position="50"/>
        <end position="58"/>
    </location>
</feature>
<feature type="helix" evidence="52">
    <location>
        <begin position="60"/>
        <end position="62"/>
    </location>
</feature>
<feature type="helix" evidence="47">
    <location>
        <begin position="64"/>
        <end position="79"/>
    </location>
</feature>
<feature type="strand" evidence="44">
    <location>
        <begin position="83"/>
        <end position="85"/>
    </location>
</feature>
<feature type="strand" evidence="47">
    <location>
        <begin position="88"/>
        <end position="92"/>
    </location>
</feature>
<feature type="strand" evidence="51">
    <location>
        <begin position="94"/>
        <end position="97"/>
    </location>
</feature>
<feature type="turn" evidence="47">
    <location>
        <begin position="98"/>
        <end position="100"/>
    </location>
</feature>
<feature type="strand" evidence="47">
    <location>
        <begin position="103"/>
        <end position="109"/>
    </location>
</feature>
<feature type="strand" evidence="47">
    <location>
        <begin position="112"/>
        <end position="114"/>
    </location>
</feature>
<feature type="helix" evidence="47">
    <location>
        <begin position="115"/>
        <end position="120"/>
    </location>
</feature>
<feature type="helix" evidence="47">
    <location>
        <begin position="125"/>
        <end position="144"/>
    </location>
</feature>
<feature type="helix" evidence="47">
    <location>
        <begin position="154"/>
        <end position="156"/>
    </location>
</feature>
<feature type="strand" evidence="47">
    <location>
        <begin position="157"/>
        <end position="159"/>
    </location>
</feature>
<feature type="turn" evidence="45">
    <location>
        <begin position="161"/>
        <end position="163"/>
    </location>
</feature>
<feature type="strand" evidence="47">
    <location>
        <begin position="165"/>
        <end position="167"/>
    </location>
</feature>
<feature type="strand" evidence="49">
    <location>
        <begin position="174"/>
        <end position="177"/>
    </location>
</feature>
<feature type="strand" evidence="46">
    <location>
        <begin position="178"/>
        <end position="180"/>
    </location>
</feature>
<feature type="strand" evidence="48">
    <location>
        <begin position="182"/>
        <end position="184"/>
    </location>
</feature>
<feature type="strand" evidence="43">
    <location>
        <begin position="185"/>
        <end position="187"/>
    </location>
</feature>
<feature type="helix" evidence="50">
    <location>
        <begin position="189"/>
        <end position="191"/>
    </location>
</feature>
<feature type="helix" evidence="47">
    <location>
        <begin position="194"/>
        <end position="197"/>
    </location>
</feature>
<feature type="helix" evidence="47">
    <location>
        <begin position="206"/>
        <end position="220"/>
    </location>
</feature>
<feature type="helix" evidence="47">
    <location>
        <begin position="230"/>
        <end position="241"/>
    </location>
</feature>
<feature type="helix" evidence="47">
    <location>
        <begin position="246"/>
        <end position="249"/>
    </location>
</feature>
<feature type="helix" evidence="47">
    <location>
        <begin position="254"/>
        <end position="261"/>
    </location>
</feature>
<feature type="helix" evidence="47">
    <location>
        <begin position="271"/>
        <end position="274"/>
    </location>
</feature>
<feature type="helix" evidence="47">
    <location>
        <begin position="277"/>
        <end position="279"/>
    </location>
</feature>
<feature type="helix" evidence="47">
    <location>
        <begin position="285"/>
        <end position="301"/>
    </location>
</feature>
<feature type="helix" evidence="47">
    <location>
        <begin position="306"/>
        <end position="308"/>
    </location>
</feature>
<feature type="helix" evidence="47">
    <location>
        <begin position="312"/>
        <end position="317"/>
    </location>
</feature>
<feature type="helix" evidence="47">
    <location>
        <begin position="319"/>
        <end position="322"/>
    </location>
</feature>
<feature type="helix" evidence="47">
    <location>
        <begin position="327"/>
        <end position="330"/>
    </location>
</feature>
<feature type="turn" evidence="47">
    <location>
        <begin position="339"/>
        <end position="342"/>
    </location>
</feature>
<feature type="helix" evidence="47">
    <location>
        <begin position="349"/>
        <end position="363"/>
    </location>
</feature>
<feature type="modified residue" description="Phosphoserine" evidence="41 42">
    <location sequence="P45983-2">
        <position position="377"/>
    </location>
</feature>
<feature type="modified residue" description="Phosphoserine" evidence="41 42">
    <location sequence="P45983-3">
        <position position="377"/>
    </location>
</feature>
<feature type="modified residue" description="Phosphoserine" evidence="41 42">
    <location sequence="P45983-5">
        <position position="301"/>
    </location>
</feature>
<comment type="function">
    <text evidence="1 2 6 12 14 18 19 21 22 24 26 27 28 29 30 31 33">Serine/threonine-protein kinase involved in various processes such as cell proliferation, differentiation, migration, transformation and programmed cell death. Extracellular stimuli such as pro-inflammatory cytokines or physical stress stimulate the stress-activated protein kinase/c-Jun N-terminal kinase (SAP/JNK) signaling pathway (PubMed:28943315). In this cascade, two dual specificity kinases MAP2K4/MKK4 and MAP2K7/MKK7 phosphorylate and activate MAPK8/JNK1. In turn, MAPK8/JNK1 phosphorylates a number of transcription factors, primarily components of AP-1 such as JUN, JDP2 and ATF2 and thus regulates AP-1 transcriptional activity (PubMed:18307971). Phosphorylates the replication licensing factor CDT1, inhibiting the interaction between CDT1 and the histone H4 acetylase HBO1 to replication origins (PubMed:21856198). Loss of this interaction abrogates the acetylation required for replication initiation (PubMed:21856198). Promotes stressed cell apoptosis by phosphorylating key regulatory factors including p53/TP53 and Yes-associates protein YAP1 (PubMed:21364637). In T-cells, MAPK8 and MAPK9 are required for polarized differentiation of T-helper cells into Th1 cells. Contributes to the survival of erythroid cells by phosphorylating the antagonist of cell death BAD upon EPO stimulation (PubMed:21095239). Mediates starvation-induced BCL2 phosphorylation, BCL2 dissociation from BECN1, and thus activation of autophagy (PubMed:18570871). Phosphorylates STMN2 and hence regulates microtubule dynamics, controlling neurite elongation in cortical neurons (By similarity). In the developing brain, through its cytoplasmic activity on STMN2, negatively regulates the rate of exit from multipolar stage and of radial migration from the ventricular zone (By similarity). Phosphorylates several other substrates including heat shock factor protein 4 (HSF4), the deacetylase SIRT1, ELK1, or the E3 ligase ITCH (PubMed:16581800, PubMed:17296730, PubMed:20027304). Phosphorylates the CLOCK-BMAL1 heterodimer and plays a role in the regulation of the circadian clock (PubMed:22441692). Phosphorylates the heat shock transcription factor HSF1, suppressing HSF1-induced transcriptional activity (PubMed:10747973). Phosphorylates POU5F1, which results in the inhibition of POU5F1's transcriptional activity and enhances its proteasomal degradation (By similarity). Phosphorylates JUND and this phosphorylation is inhibited in the presence of MEN1 (PubMed:22327296). In neurons, phosphorylates SYT4 which captures neuronal dense core vesicles at synapses (By similarity). Phosphorylates EIF4ENIF1/4-ET in response to oxidative stress, promoting P-body assembly (PubMed:22966201). Phosphorylates SIRT6 in response to oxidative stress, stimulating its mono-ADP-ribosyltransferase activity (PubMed:27568560). Phosphorylates NLRP3, promoting assembly of the NLRP3 inflammasome (PubMed:28943315). Phosphorylates ALKBH5 in response to reactive oxygen species (ROS), promoting ALKBH5 sumoylation and inactivation (PubMed:34048572).</text>
</comment>
<comment type="function">
    <text>JNK1 isoforms display different binding patterns: beta-1 preferentially binds to c-Jun, whereas alpha-1, alpha-2, and beta-2 have a similar low level of binding to both c-Jun or ATF2. However, there is no correlation between binding and phosphorylation, which is achieved at about the same efficiency by all isoforms.</text>
</comment>
<comment type="catalytic activity">
    <reaction evidence="6 7 8 10 12 14 17 18 20 21 22 24 25 26 28 29 30 31 33 35">
        <text>L-seryl-[protein] + ATP = O-phospho-L-seryl-[protein] + ADP + H(+)</text>
        <dbReference type="Rhea" id="RHEA:17989"/>
        <dbReference type="Rhea" id="RHEA-COMP:9863"/>
        <dbReference type="Rhea" id="RHEA-COMP:11604"/>
        <dbReference type="ChEBI" id="CHEBI:15378"/>
        <dbReference type="ChEBI" id="CHEBI:29999"/>
        <dbReference type="ChEBI" id="CHEBI:30616"/>
        <dbReference type="ChEBI" id="CHEBI:83421"/>
        <dbReference type="ChEBI" id="CHEBI:456216"/>
        <dbReference type="EC" id="2.7.11.24"/>
    </reaction>
</comment>
<comment type="catalytic activity">
    <reaction evidence="6 7 8 10 12 14 17 18 20 21 22 24 25 26 28 35">
        <text>L-threonyl-[protein] + ATP = O-phospho-L-threonyl-[protein] + ADP + H(+)</text>
        <dbReference type="Rhea" id="RHEA:46608"/>
        <dbReference type="Rhea" id="RHEA-COMP:11060"/>
        <dbReference type="Rhea" id="RHEA-COMP:11605"/>
        <dbReference type="ChEBI" id="CHEBI:15378"/>
        <dbReference type="ChEBI" id="CHEBI:30013"/>
        <dbReference type="ChEBI" id="CHEBI:30616"/>
        <dbReference type="ChEBI" id="CHEBI:61977"/>
        <dbReference type="ChEBI" id="CHEBI:456216"/>
        <dbReference type="EC" id="2.7.11.24"/>
    </reaction>
</comment>
<comment type="cofactor">
    <cofactor evidence="8">
        <name>Mg(2+)</name>
        <dbReference type="ChEBI" id="CHEBI:18420"/>
    </cofactor>
</comment>
<comment type="activity regulation">
    <text evidence="20">Activated by threonine and tyrosine phosphorylation by either of two dual specificity kinases, MAP2K4 and MAP2K7. MAP2K4 shows a strong preference for Tyr-185 while MAP2K7 phosphorylates Tyr-183 preferentially. Inhibited by dual specificity phosphatases, such as DUSP1. Inhibited by SERPINB3.</text>
</comment>
<comment type="subunit">
    <text evidence="1 2 6 7 9 11 12 16 17 20 25">Forms a complex with MAPK8IP1 and ARHGEF28 (By similarity). Found in a complex with SH3RF1, RAC1, MAP3K11/MLK3, MAP2K7/MKK7 and MAPK8IP1/JIP1. Found in a complex with SH3RF1, RAC2, MAP3K7/TAK1, MAP2K7/MKK7, MAPK8IP1/JIP1 and MAPK9/JNK2 (By similarity). Binds to at least four scaffolding proteins, MAPK8IP1/JIP-1, MAPK8IP2/JIP-2, MAPK8IP3/JIP-3/JSAP1 and SPAG9/MAPK8IP4/JIP-4 (PubMed:15693750). These proteins also bind other components of the JNK signaling pathway. Interacts with TP53 and WWOX (PubMed:12514174). Interacts with JAMP (By similarity). Interacts with HSF1 (via D domain and preferentially with hyperphosphorylated form); this interaction occurs under both normal growth conditions and immediately upon heat shock (PubMed:10747973). Interacts (phosphorylated form) with NFE2; the interaction phosphorylates NFE2 in undifferentiated cells (By similarity). Interacts with NFATC4 (PubMed:17875713). Interacts with MECOM; regulates JNK signaling (PubMed:10856240). Interacts with PIN1; this interaction mediates MAPK8 conformational changes leading to the binding of MAPK8 to its substrates (PubMed:21660049). Interacts with GRIPAP1 (PubMed:17761173). Interacts with POU5F1; phosphorylates POU5F1 at 'Ser-355'. Interacts with STMN2, STMN3 and STMN4 (By similarity). Interacts with HSF4 (PubMed:16581800).</text>
</comment>
<comment type="interaction">
    <interactant intactId="EBI-286483">
        <id>P45983</id>
    </interactant>
    <interactant intactId="EBI-518228">
        <id>P22681</id>
        <label>CBL</label>
    </interactant>
    <organismsDiffer>false</organismsDiffer>
    <experiments>2</experiments>
</comment>
<comment type="interaction">
    <interactant intactId="EBI-286483">
        <id>P45983</id>
    </interactant>
    <interactant intactId="EBI-12955011">
        <id>P56747</id>
        <label>CLDN6</label>
    </interactant>
    <organismsDiffer>false</organismsDiffer>
    <experiments>3</experiments>
</comment>
<comment type="interaction">
    <interactant intactId="EBI-286483">
        <id>P45983</id>
    </interactant>
    <interactant intactId="EBI-6380262">
        <id>Q13202</id>
        <label>DUSP8</label>
    </interactant>
    <organismsDiffer>false</organismsDiffer>
    <experiments>3</experiments>
</comment>
<comment type="interaction">
    <interactant intactId="EBI-286483">
        <id>P45983</id>
    </interactant>
    <interactant intactId="EBI-494830">
        <id>P16104</id>
        <label>H2AX</label>
    </interactant>
    <organismsDiffer>false</organismsDiffer>
    <experiments>3</experiments>
</comment>
<comment type="interaction">
    <interactant intactId="EBI-286483">
        <id>P45983</id>
    </interactant>
    <interactant intactId="EBI-852823">
        <id>P05412</id>
        <label>JUN</label>
    </interactant>
    <organismsDiffer>false</organismsDiffer>
    <experiments>5</experiments>
</comment>
<comment type="interaction">
    <interactant intactId="EBI-286483">
        <id>P45983</id>
    </interactant>
    <interactant intactId="EBI-447868">
        <id>P45985</id>
        <label>MAP2K4</label>
    </interactant>
    <organismsDiffer>false</organismsDiffer>
    <experiments>3</experiments>
</comment>
<comment type="interaction">
    <interactant intactId="EBI-286483">
        <id>P45983</id>
    </interactant>
    <interactant intactId="EBI-492627">
        <id>O14733-2</id>
        <label>MAP2K7</label>
    </interactant>
    <organismsDiffer>false</organismsDiffer>
    <experiments>3</experiments>
</comment>
<comment type="interaction">
    <interactant intactId="EBI-286483">
        <id>P45983</id>
    </interactant>
    <interactant intactId="EBI-78404">
        <id>Q9UQF2</id>
        <label>MAPK8IP1</label>
    </interactant>
    <organismsDiffer>false</organismsDiffer>
    <experiments>8</experiments>
</comment>
<comment type="interaction">
    <interactant intactId="EBI-286483">
        <id>P45983</id>
    </interactant>
    <interactant intactId="EBI-713568">
        <id>P45984</id>
        <label>MAPK9</label>
    </interactant>
    <organismsDiffer>false</organismsDiffer>
    <experiments>5</experiments>
</comment>
<comment type="interaction">
    <interactant intactId="EBI-286483">
        <id>P45983</id>
    </interactant>
    <interactant intactId="EBI-79464">
        <id>P27986</id>
        <label>PIK3R1</label>
    </interactant>
    <organismsDiffer>false</organismsDiffer>
    <experiments>6</experiments>
</comment>
<comment type="interaction">
    <interactant intactId="EBI-286483">
        <id>P45983</id>
    </interactant>
    <interactant intactId="EBI-1567928">
        <id>Q8N122</id>
        <label>RPTOR</label>
    </interactant>
    <organismsDiffer>false</organismsDiffer>
    <experiments>6</experiments>
</comment>
<comment type="interaction">
    <interactant intactId="EBI-286483">
        <id>P45983</id>
    </interactant>
    <interactant intactId="EBI-288461">
        <id>Q9WVI9-1</id>
        <label>Mapk8ip1</label>
    </interactant>
    <organismsDiffer>true</organismsDiffer>
    <experiments>2</experiments>
</comment>
<comment type="interaction">
    <interactant intactId="EBI-288687">
        <id>P45983-1</id>
    </interactant>
    <interactant intactId="EBI-852823">
        <id>P05412</id>
        <label>JUN</label>
    </interactant>
    <organismsDiffer>false</organismsDiffer>
    <experiments>2</experiments>
</comment>
<comment type="interaction">
    <interactant intactId="EBI-18121963">
        <id>P45983-4</id>
    </interactant>
    <interactant intactId="EBI-3443946">
        <id>Q9Y6W6</id>
        <label>DUSP10</label>
    </interactant>
    <organismsDiffer>false</organismsDiffer>
    <experiments>3</experiments>
</comment>
<comment type="interaction">
    <interactant intactId="EBI-18121963">
        <id>P45983-4</id>
    </interactant>
    <interactant intactId="EBI-3443956">
        <id>Q9BY84</id>
        <label>DUSP16</label>
    </interactant>
    <organismsDiffer>false</organismsDiffer>
    <experiments>3</experiments>
</comment>
<comment type="subcellular location">
    <subcellularLocation>
        <location evidence="23">Cytoplasm</location>
    </subcellularLocation>
    <subcellularLocation>
        <location evidence="23 32">Nucleus</location>
    </subcellularLocation>
    <subcellularLocation>
        <location evidence="1">Synapse</location>
    </subcellularLocation>
    <text evidence="1 2">In the cortical neurons, predominantly cytoplasmic and associated with the Golgi apparatus and endosomal fraction. Increased neuronal activity increases phosphorylated form at synapses (By similarity). Colocalizes with POU5F1 in the nucleus.</text>
</comment>
<comment type="alternative products">
    <event type="alternative splicing"/>
    <isoform>
        <id>P45983-1</id>
        <name>2</name>
        <name>JNK1-alpha-2</name>
        <sequence type="displayed"/>
    </isoform>
    <isoform>
        <id>P45983-2</id>
        <name>1</name>
        <name>JNK1-alpha-1</name>
        <sequence type="described" ref="VSP_004833"/>
    </isoform>
    <isoform>
        <id>P45983-3</id>
        <name>3</name>
        <name>JNK1-beta-1</name>
        <sequence type="described" ref="VSP_004831 VSP_004832 VSP_004833"/>
    </isoform>
    <isoform>
        <id>P45983-4</id>
        <name>4</name>
        <name>JNK1-beta-2</name>
        <sequence type="described" ref="VSP_004831 VSP_004832"/>
    </isoform>
    <isoform>
        <id>P45983-5</id>
        <name>5</name>
        <sequence type="described" ref="VSP_054554 VSP_004833"/>
    </isoform>
</comment>
<comment type="domain">
    <text>The TXY motif contains the threonine and tyrosine residues whose phosphorylation activates the MAP kinases.</text>
</comment>
<comment type="PTM">
    <text evidence="1 8 13 16">Dually phosphorylated on Thr-183 and Tyr-185 by MAP2K7 and MAP2K4, which activates the enzyme (PubMed:11062067). Phosphorylated by TAOK2 (PubMed:17158878). May be phosphorylated at Thr-183 and Tyr-185 by MAP3K1/MEKK1 (PubMed:17761173). Phosphorylated form is more concentrated at synapses than none-phosphorylated (By similarity).</text>
</comment>
<comment type="similarity">
    <text evidence="40">Belongs to the protein kinase superfamily. CMGC Ser/Thr protein kinase family. MAP kinase subfamily.</text>
</comment>
<comment type="online information" name="Atlas of Genetics and Cytogenetics in Oncology and Haematology">
    <link uri="https://atlasgeneticsoncology.org/gene/196/JNK1"/>
</comment>
<comment type="online information" name="Wikipedia">
    <link uri="https://en.wikipedia.org/wiki/C-Jun_N-terminal_kinases"/>
    <text>C-Jun N-terminal kinases entry</text>
</comment>
<keyword id="KW-0002">3D-structure</keyword>
<keyword id="KW-0025">Alternative splicing</keyword>
<keyword id="KW-0067">ATP-binding</keyword>
<keyword id="KW-0090">Biological rhythms</keyword>
<keyword id="KW-0963">Cytoplasm</keyword>
<keyword id="KW-0418">Kinase</keyword>
<keyword id="KW-0547">Nucleotide-binding</keyword>
<keyword id="KW-0539">Nucleus</keyword>
<keyword id="KW-0597">Phosphoprotein</keyword>
<keyword id="KW-1267">Proteomics identification</keyword>
<keyword id="KW-1185">Reference proteome</keyword>
<keyword id="KW-0702">S-nitrosylation</keyword>
<keyword id="KW-0723">Serine/threonine-protein kinase</keyword>
<keyword id="KW-0770">Synapse</keyword>
<keyword id="KW-0808">Transferase</keyword>
<reference key="1">
    <citation type="journal article" date="1994" name="Cell">
        <title>JNK1: a protein kinase stimulated by UV light and Ha-Ras that binds and phosphorylates the c-Jun activation domain.</title>
        <authorList>
            <person name="Derijard B."/>
            <person name="Hibi M."/>
            <person name="Wu I.-H."/>
            <person name="Barrett T."/>
            <person name="Su B."/>
            <person name="Deng T."/>
            <person name="Karin M."/>
            <person name="Davis R.J."/>
        </authorList>
    </citation>
    <scope>NUCLEOTIDE SEQUENCE [MRNA]</scope>
    <source>
        <tissue>Fetal brain</tissue>
    </source>
</reference>
<reference key="2">
    <citation type="journal article" date="1996" name="EMBO J.">
        <title>Selective interaction of JNK protein kinase isoforms with transcription factors.</title>
        <authorList>
            <person name="Gupta S."/>
            <person name="Barrett T."/>
            <person name="Whitmarsh A.J."/>
            <person name="Cavanagh J."/>
            <person name="Sluss H.K."/>
            <person name="Derijard B."/>
            <person name="Davis R.J."/>
        </authorList>
    </citation>
    <scope>NUCLEOTIDE SEQUENCE [MRNA]</scope>
    <scope>ALTERNATIVE SPLICING</scope>
    <scope>CATALYTIC ACTIVITY</scope>
    <source>
        <tissue>Brain</tissue>
    </source>
</reference>
<reference key="3">
    <citation type="submission" date="2005-10" db="EMBL/GenBank/DDBJ databases">
        <authorList>
            <person name="Lin L."/>
            <person name="Nong W."/>
            <person name="Zhou G."/>
            <person name="Ke R."/>
            <person name="Shen C."/>
            <person name="Zhong G."/>
            <person name="Zheng Z."/>
            <person name="Liang M."/>
            <person name="Tang Z."/>
            <person name="Huang B."/>
            <person name="Li H."/>
            <person name="Yang S."/>
        </authorList>
    </citation>
    <scope>NUCLEOTIDE SEQUENCE [MRNA] (ISOFORM 5)</scope>
</reference>
<reference key="4">
    <citation type="journal article" date="2004" name="Nature">
        <title>The DNA sequence and comparative analysis of human chromosome 10.</title>
        <authorList>
            <person name="Deloukas P."/>
            <person name="Earthrowl M.E."/>
            <person name="Grafham D.V."/>
            <person name="Rubenfield M."/>
            <person name="French L."/>
            <person name="Steward C.A."/>
            <person name="Sims S.K."/>
            <person name="Jones M.C."/>
            <person name="Searle S."/>
            <person name="Scott C."/>
            <person name="Howe K."/>
            <person name="Hunt S.E."/>
            <person name="Andrews T.D."/>
            <person name="Gilbert J.G.R."/>
            <person name="Swarbreck D."/>
            <person name="Ashurst J.L."/>
            <person name="Taylor A."/>
            <person name="Battles J."/>
            <person name="Bird C.P."/>
            <person name="Ainscough R."/>
            <person name="Almeida J.P."/>
            <person name="Ashwell R.I.S."/>
            <person name="Ambrose K.D."/>
            <person name="Babbage A.K."/>
            <person name="Bagguley C.L."/>
            <person name="Bailey J."/>
            <person name="Banerjee R."/>
            <person name="Bates K."/>
            <person name="Beasley H."/>
            <person name="Bray-Allen S."/>
            <person name="Brown A.J."/>
            <person name="Brown J.Y."/>
            <person name="Burford D.C."/>
            <person name="Burrill W."/>
            <person name="Burton J."/>
            <person name="Cahill P."/>
            <person name="Camire D."/>
            <person name="Carter N.P."/>
            <person name="Chapman J.C."/>
            <person name="Clark S.Y."/>
            <person name="Clarke G."/>
            <person name="Clee C.M."/>
            <person name="Clegg S."/>
            <person name="Corby N."/>
            <person name="Coulson A."/>
            <person name="Dhami P."/>
            <person name="Dutta I."/>
            <person name="Dunn M."/>
            <person name="Faulkner L."/>
            <person name="Frankish A."/>
            <person name="Frankland J.A."/>
            <person name="Garner P."/>
            <person name="Garnett J."/>
            <person name="Gribble S."/>
            <person name="Griffiths C."/>
            <person name="Grocock R."/>
            <person name="Gustafson E."/>
            <person name="Hammond S."/>
            <person name="Harley J.L."/>
            <person name="Hart E."/>
            <person name="Heath P.D."/>
            <person name="Ho T.P."/>
            <person name="Hopkins B."/>
            <person name="Horne J."/>
            <person name="Howden P.J."/>
            <person name="Huckle E."/>
            <person name="Hynds C."/>
            <person name="Johnson C."/>
            <person name="Johnson D."/>
            <person name="Kana A."/>
            <person name="Kay M."/>
            <person name="Kimberley A.M."/>
            <person name="Kershaw J.K."/>
            <person name="Kokkinaki M."/>
            <person name="Laird G.K."/>
            <person name="Lawlor S."/>
            <person name="Lee H.M."/>
            <person name="Leongamornlert D.A."/>
            <person name="Laird G."/>
            <person name="Lloyd C."/>
            <person name="Lloyd D.M."/>
            <person name="Loveland J."/>
            <person name="Lovell J."/>
            <person name="McLaren S."/>
            <person name="McLay K.E."/>
            <person name="McMurray A."/>
            <person name="Mashreghi-Mohammadi M."/>
            <person name="Matthews L."/>
            <person name="Milne S."/>
            <person name="Nickerson T."/>
            <person name="Nguyen M."/>
            <person name="Overton-Larty E."/>
            <person name="Palmer S.A."/>
            <person name="Pearce A.V."/>
            <person name="Peck A.I."/>
            <person name="Pelan S."/>
            <person name="Phillimore B."/>
            <person name="Porter K."/>
            <person name="Rice C.M."/>
            <person name="Rogosin A."/>
            <person name="Ross M.T."/>
            <person name="Sarafidou T."/>
            <person name="Sehra H.K."/>
            <person name="Shownkeen R."/>
            <person name="Skuce C.D."/>
            <person name="Smith M."/>
            <person name="Standring L."/>
            <person name="Sycamore N."/>
            <person name="Tester J."/>
            <person name="Thorpe A."/>
            <person name="Torcasso W."/>
            <person name="Tracey A."/>
            <person name="Tromans A."/>
            <person name="Tsolas J."/>
            <person name="Wall M."/>
            <person name="Walsh J."/>
            <person name="Wang H."/>
            <person name="Weinstock K."/>
            <person name="West A.P."/>
            <person name="Willey D.L."/>
            <person name="Whitehead S.L."/>
            <person name="Wilming L."/>
            <person name="Wray P.W."/>
            <person name="Young L."/>
            <person name="Chen Y."/>
            <person name="Lovering R.C."/>
            <person name="Moschonas N.K."/>
            <person name="Siebert R."/>
            <person name="Fechtel K."/>
            <person name="Bentley D."/>
            <person name="Durbin R.M."/>
            <person name="Hubbard T."/>
            <person name="Doucette-Stamm L."/>
            <person name="Beck S."/>
            <person name="Smith D.R."/>
            <person name="Rogers J."/>
        </authorList>
    </citation>
    <scope>NUCLEOTIDE SEQUENCE [LARGE SCALE GENOMIC DNA]</scope>
</reference>
<reference key="5">
    <citation type="journal article" date="2008" name="Nat. Methods">
        <title>Human protein factory for converting the transcriptome into an in vitro-expressed proteome.</title>
        <authorList>
            <person name="Goshima N."/>
            <person name="Kawamura Y."/>
            <person name="Fukumoto A."/>
            <person name="Miura A."/>
            <person name="Honma R."/>
            <person name="Satoh R."/>
            <person name="Wakamatsu A."/>
            <person name="Yamamoto J."/>
            <person name="Kimura K."/>
            <person name="Nishikawa T."/>
            <person name="Andoh T."/>
            <person name="Iida Y."/>
            <person name="Ishikawa K."/>
            <person name="Ito E."/>
            <person name="Kagawa N."/>
            <person name="Kaminaga C."/>
            <person name="Kanehori K."/>
            <person name="Kawakami B."/>
            <person name="Kenmochi K."/>
            <person name="Kimura R."/>
            <person name="Kobayashi M."/>
            <person name="Kuroita T."/>
            <person name="Kuwayama H."/>
            <person name="Maruyama Y."/>
            <person name="Matsuo K."/>
            <person name="Minami K."/>
            <person name="Mitsubori M."/>
            <person name="Mori M."/>
            <person name="Morishita R."/>
            <person name="Murase A."/>
            <person name="Nishikawa A."/>
            <person name="Nishikawa S."/>
            <person name="Okamoto T."/>
            <person name="Sakagami N."/>
            <person name="Sakamoto Y."/>
            <person name="Sasaki Y."/>
            <person name="Seki T."/>
            <person name="Sono S."/>
            <person name="Sugiyama A."/>
            <person name="Sumiya T."/>
            <person name="Takayama T."/>
            <person name="Takayama Y."/>
            <person name="Takeda H."/>
            <person name="Togashi T."/>
            <person name="Yahata K."/>
            <person name="Yamada H."/>
            <person name="Yanagisawa Y."/>
            <person name="Endo Y."/>
            <person name="Imamoto F."/>
            <person name="Kisu Y."/>
            <person name="Tanaka S."/>
            <person name="Isogai T."/>
            <person name="Imai J."/>
            <person name="Watanabe S."/>
            <person name="Nomura N."/>
        </authorList>
    </citation>
    <scope>NUCLEOTIDE SEQUENCE [LARGE SCALE MRNA] (ISOFORM 1)</scope>
</reference>
<reference key="6">
    <citation type="submission" date="2005-09" db="EMBL/GenBank/DDBJ databases">
        <authorList>
            <person name="Mural R.J."/>
            <person name="Istrail S."/>
            <person name="Sutton G.G."/>
            <person name="Florea L."/>
            <person name="Halpern A.L."/>
            <person name="Mobarry C.M."/>
            <person name="Lippert R."/>
            <person name="Walenz B."/>
            <person name="Shatkay H."/>
            <person name="Dew I."/>
            <person name="Miller J.R."/>
            <person name="Flanigan M.J."/>
            <person name="Edwards N.J."/>
            <person name="Bolanos R."/>
            <person name="Fasulo D."/>
            <person name="Halldorsson B.V."/>
            <person name="Hannenhalli S."/>
            <person name="Turner R."/>
            <person name="Yooseph S."/>
            <person name="Lu F."/>
            <person name="Nusskern D.R."/>
            <person name="Shue B.C."/>
            <person name="Zheng X.H."/>
            <person name="Zhong F."/>
            <person name="Delcher A.L."/>
            <person name="Huson D.H."/>
            <person name="Kravitz S.A."/>
            <person name="Mouchard L."/>
            <person name="Reinert K."/>
            <person name="Remington K.A."/>
            <person name="Clark A.G."/>
            <person name="Waterman M.S."/>
            <person name="Eichler E.E."/>
            <person name="Adams M.D."/>
            <person name="Hunkapiller M.W."/>
            <person name="Myers E.W."/>
            <person name="Venter J.C."/>
        </authorList>
    </citation>
    <scope>NUCLEOTIDE SEQUENCE [LARGE SCALE GENOMIC DNA]</scope>
</reference>
<reference key="7">
    <citation type="journal article" date="2004" name="Genome Res.">
        <title>The status, quality, and expansion of the NIH full-length cDNA project: the Mammalian Gene Collection (MGC).</title>
        <authorList>
            <consortium name="The MGC Project Team"/>
        </authorList>
    </citation>
    <scope>NUCLEOTIDE SEQUENCE [LARGE SCALE MRNA] (ISOFORM 3)</scope>
</reference>
<reference key="8">
    <citation type="journal article" date="1995" name="Science">
        <title>Independent human MAP-kinase signal transduction pathways defined by MEK and MKK isoforms.</title>
        <authorList>
            <person name="Derijard B."/>
            <person name="Raingeaud J."/>
            <person name="Barrett T."/>
            <person name="Wu I.-H."/>
            <person name="Han J."/>
            <person name="Ulevitch R.J."/>
            <person name="Davis R.J."/>
        </authorList>
    </citation>
    <scope>MUTAGENESIS OF THR-183 AND TYR-185</scope>
</reference>
<reference key="9">
    <citation type="journal article" date="2000" name="Biochem. J.">
        <title>Synergistic activation of stress-activated protein kinase 1/c-Jun N-terminal kinase (SAPK1/JNK) isoforms by mitogen-activated protein kinase kinase 4 (MKK4) and MKK7.</title>
        <authorList>
            <person name="Fleming Y."/>
            <person name="Armstrong C.G."/>
            <person name="Morrice N."/>
            <person name="Paterson A."/>
            <person name="Goedert M."/>
            <person name="Cohen P."/>
        </authorList>
    </citation>
    <scope>PHOSPHORYLATION AT THR-183 AND TYR-185</scope>
    <scope>REGULATION BY MAP2K4 AND MAP2K7</scope>
    <scope>CATALYTIC ACTIVITY</scope>
    <scope>COFACTOR</scope>
</reference>
<reference key="10">
    <citation type="journal article" date="2000" name="EMBO J.">
        <title>The evi-1 oncoprotein inhibits c-Jun N-terminal kinase and prevents stress-induced cell death.</title>
        <authorList>
            <person name="Kurokawa M."/>
            <person name="Mitani K."/>
            <person name="Yamagata T."/>
            <person name="Takahashi T."/>
            <person name="Izutsu K."/>
            <person name="Ogawa S."/>
            <person name="Moriguchi T."/>
            <person name="Nishida E."/>
            <person name="Yazaki Y."/>
            <person name="Hirai H."/>
        </authorList>
    </citation>
    <scope>INTERACTION WITH MECOM</scope>
    <scope>CATALYTIC ACTIVITY</scope>
</reference>
<reference key="11">
    <citation type="journal article" date="2000" name="J. Biol. Chem.">
        <title>c-Jun NH2-terminal kinase targeting and phosphorylation of heat shock factor-1 suppress its transcriptional activity.</title>
        <authorList>
            <person name="Dai R."/>
            <person name="Frejtag W."/>
            <person name="He B."/>
            <person name="Zhang Y."/>
            <person name="Mivechi N.F."/>
        </authorList>
    </citation>
    <scope>FUNCTION IN PHOSPHORYLATION OF HSF1</scope>
    <scope>CATALYTIC ACTIVITY</scope>
    <scope>INTERACTION WITH HSF1</scope>
</reference>
<reference key="12">
    <citation type="journal article" date="2003" name="J. Biol. Chem.">
        <title>JNK1 physically interacts with WW domain-containing oxidoreductase (WOX1) and inhibits WOX1-mediated apoptosis.</title>
        <authorList>
            <person name="Chang N.-S."/>
            <person name="Doherty J."/>
            <person name="Ensign A."/>
        </authorList>
    </citation>
    <scope>INTERACTION WITH WWOX AND TP53</scope>
</reference>
<reference key="13">
    <citation type="journal article" date="2005" name="Biochem. J.">
        <title>Characterization of a novel human sperm-associated antigen 9 (SPAG9) having structural homology with c-Jun N-terminal kinase-interacting protein.</title>
        <authorList>
            <person name="Jagadish N."/>
            <person name="Rana R."/>
            <person name="Selvi R."/>
            <person name="Mishra D."/>
            <person name="Garg M."/>
            <person name="Yadav S."/>
            <person name="Herr J.C."/>
            <person name="Okumura K."/>
            <person name="Hasegawa A."/>
            <person name="Koyama K."/>
            <person name="Suri A."/>
        </authorList>
    </citation>
    <scope>INTERACTION WITH SPAG9</scope>
</reference>
<reference key="14">
    <citation type="journal article" date="2006" name="Mol. Cell. Biol.">
        <title>Association and regulation of heat shock transcription factor 4b with both extracellular signal-regulated kinase mitogen-activated protein kinase and dual-specificity tyrosine phosphatase DUSP26.</title>
        <authorList>
            <person name="Hu Y."/>
            <person name="Mivechi N.F."/>
        </authorList>
    </citation>
    <scope>FUNCTION</scope>
    <scope>INTERACTION WITH HSF4</scope>
    <scope>CATALYTIC ACTIVITY</scope>
</reference>
<reference key="15">
    <citation type="journal article" date="2007" name="Cancer Res.">
        <title>Nuclear factor of activated T3 is a negative regulator of Ras-JNK1/2-AP-1 induced cell transformation.</title>
        <authorList>
            <person name="Yao K."/>
            <person name="Cho Y.-Y."/>
            <person name="Bergen H.R. III"/>
            <person name="Madden B.J."/>
            <person name="Choi B.Y."/>
            <person name="Ma W.-Y."/>
            <person name="Bode A.M."/>
            <person name="Dong Z."/>
        </authorList>
    </citation>
    <scope>INTERACTION WITH NFATC4</scope>
    <scope>CATALYTIC ACTIVITY</scope>
</reference>
<reference key="16">
    <citation type="journal article" date="2007" name="FEBS Lett.">
        <title>GRASP-1 is a neuronal scaffold protein for the JNK signaling pathway.</title>
        <authorList>
            <person name="Ye B."/>
            <person name="Yu W.P."/>
            <person name="Thomas G.M."/>
            <person name="Huganir R.L."/>
        </authorList>
    </citation>
    <scope>INTERACTION WITH GRIPAP1</scope>
    <scope>PHOSPHORYLATION BY MAP3K1</scope>
</reference>
<reference key="17">
    <citation type="journal article" date="2007" name="J. Biol. Chem.">
        <title>Prostate-derived sterile 20-like kinase 1-alpha induces apoptosis. JNK- and caspase-dependent nuclear localization is a requirement for membrane blebbing.</title>
        <authorList>
            <person name="Zihni C."/>
            <person name="Mitsopoulos C."/>
            <person name="Tavares I.A."/>
            <person name="Baum B."/>
            <person name="Ridley A.J."/>
            <person name="Morris J.D."/>
        </authorList>
    </citation>
    <scope>PHOSPHORYLATION BY TAOK2</scope>
</reference>
<reference key="18">
    <citation type="journal article" date="2007" name="Mol. Cell. Biol.">
        <title>Rev7/MAD2B links c-Jun N-terminal protein kinase pathway signaling to activation of the transcription factor Elk-1.</title>
        <authorList>
            <person name="Zhang L."/>
            <person name="Yang S.H."/>
            <person name="Sharrocks A.D."/>
        </authorList>
    </citation>
    <scope>FUNCTION IN PHOSPHORYLATION OF ELK1</scope>
    <scope>CATALYTIC ACTIVITY</scope>
</reference>
<reference key="19">
    <citation type="journal article" date="2008" name="Anal. Biochem.">
        <title>Phosphorylation of two eukaryotic transcription factors, Jun dimerization protein 2 and activation transcription factor 2, in Escherichia coli by Jun N-terminal kinase 1.</title>
        <authorList>
            <person name="Murata T."/>
            <person name="Shinozuka Y."/>
            <person name="Obata Y."/>
            <person name="Yokoyama K.K."/>
        </authorList>
    </citation>
    <scope>FUNCTION IN PHOSPHORYLATION OF JDP2</scope>
    <scope>CATALYTIC ACTIVITY</scope>
</reference>
<reference key="20">
    <citation type="journal article" date="2008" name="Mol. Cell">
        <title>JNK1-mediated phosphorylation of Bcl-2 regulates starvation-induced autophagy.</title>
        <authorList>
            <person name="Wei Y."/>
            <person name="Pattingre S."/>
            <person name="Sinha S."/>
            <person name="Bassik M."/>
            <person name="Levine B."/>
        </authorList>
    </citation>
    <scope>FUNCTION IN PHOSPHORYLATION OF BCL2</scope>
</reference>
<reference key="21">
    <citation type="journal article" date="2008" name="Mol. Cell">
        <title>Kinase-selective enrichment enables quantitative phosphoproteomics of the kinome across the cell cycle.</title>
        <authorList>
            <person name="Daub H."/>
            <person name="Olsen J.V."/>
            <person name="Bairlein M."/>
            <person name="Gnad F."/>
            <person name="Oppermann F.S."/>
            <person name="Korner R."/>
            <person name="Greff Z."/>
            <person name="Keri G."/>
            <person name="Stemmann O."/>
            <person name="Mann M."/>
        </authorList>
    </citation>
    <scope>PHOSPHORYLATION [LARGE SCALE ANALYSIS] AT SER-377 (ISOFORMS 1 AND 3)</scope>
    <scope>PHOSPHORYLATION [LARGE SCALE ANALYSIS] AT SER-301 (ISOFORM 5)</scope>
    <scope>IDENTIFICATION BY MASS SPECTROMETRY [LARGE SCALE ANALYSIS]</scope>
    <source>
        <tissue>Cervix carcinoma</tissue>
    </source>
</reference>
<reference key="22">
    <citation type="journal article" date="2008" name="Proc. Natl. Acad. Sci. U.S.A.">
        <title>A quantitative atlas of mitotic phosphorylation.</title>
        <authorList>
            <person name="Dephoure N."/>
            <person name="Zhou C."/>
            <person name="Villen J."/>
            <person name="Beausoleil S.A."/>
            <person name="Bakalarski C.E."/>
            <person name="Elledge S.J."/>
            <person name="Gygi S.P."/>
        </authorList>
    </citation>
    <scope>IDENTIFICATION BY MASS SPECTROMETRY [LARGE SCALE ANALYSIS]</scope>
    <source>
        <tissue>Cervix carcinoma</tissue>
    </source>
</reference>
<reference key="23">
    <citation type="journal article" date="2009" name="Biochem. Biophys. Res. Commun.">
        <title>Crystal structure of SCCA1 and insight about the interaction with JNK1.</title>
        <authorList>
            <person name="Zheng B."/>
            <person name="Matoba Y."/>
            <person name="Kumagai T."/>
            <person name="Katagiri C."/>
            <person name="Hibino T."/>
            <person name="Sugiyama M."/>
        </authorList>
    </citation>
    <scope>INTERACTION WITH SERPINB3</scope>
    <scope>CATALYTIC ACTIVITY</scope>
    <scope>ACTIVITY REGULATION</scope>
</reference>
<reference key="24">
    <citation type="journal article" date="2009" name="Mol. Cell. Proteomics">
        <title>Large-scale proteomics analysis of the human kinome.</title>
        <authorList>
            <person name="Oppermann F.S."/>
            <person name="Gnad F."/>
            <person name="Olsen J.V."/>
            <person name="Hornberger R."/>
            <person name="Greff Z."/>
            <person name="Keri G."/>
            <person name="Mann M."/>
            <person name="Daub H."/>
        </authorList>
    </citation>
    <scope>PHOSPHORYLATION [LARGE SCALE ANALYSIS] AT SER-377 (ISOFORMS 1 AND 3)</scope>
    <scope>PHOSPHORYLATION [LARGE SCALE ANALYSIS] AT SER-301 (ISOFORM 5)</scope>
    <scope>IDENTIFICATION BY MASS SPECTROMETRY [LARGE SCALE ANALYSIS]</scope>
</reference>
<reference key="25">
    <citation type="journal article" date="2009" name="PLoS ONE">
        <title>JNK1 phosphorylates SIRT1 and promotes its enzymatic activity.</title>
        <authorList>
            <person name="Nasrin N."/>
            <person name="Kaushik V.K."/>
            <person name="Fortier E."/>
            <person name="Wall D."/>
            <person name="Pearson K.J."/>
            <person name="de Cabo R."/>
            <person name="Bordone L."/>
        </authorList>
    </citation>
    <scope>FUNCTION IN PHOSPHORYLATION OF SIRT1</scope>
    <scope>CATALYTIC ACTIVITY</scope>
</reference>
<reference key="26">
    <citation type="journal article" date="2010" name="Cell Death Dis.">
        <title>JNK phosphorylates Yes-associated protein (YAP) to regulate apoptosis.</title>
        <authorList>
            <person name="Tomlinson V."/>
            <person name="Gudmundsdottir K."/>
            <person name="Luong P."/>
            <person name="Leung K.Y."/>
            <person name="Knebel A."/>
            <person name="Basu S."/>
        </authorList>
    </citation>
    <scope>FUNCTION IN PHOSPHORYLATION OF YAP1</scope>
    <scope>CATALYTIC ACTIVITY</scope>
</reference>
<reference key="27">
    <citation type="journal article" date="2011" name="BMC Syst. Biol.">
        <title>Initial characterization of the human central proteome.</title>
        <authorList>
            <person name="Burkard T.R."/>
            <person name="Planyavsky M."/>
            <person name="Kaupe I."/>
            <person name="Breitwieser F.P."/>
            <person name="Buerckstuemmer T."/>
            <person name="Bennett K.L."/>
            <person name="Superti-Furga G."/>
            <person name="Colinge J."/>
        </authorList>
    </citation>
    <scope>IDENTIFICATION BY MASS SPECTROMETRY [LARGE SCALE ANALYSIS]</scope>
</reference>
<reference key="28">
    <citation type="journal article" date="2012" name="Cell Death Differ.">
        <title>A critical step for JNK activation: isomerization by the prolyl isomerase Pin1.</title>
        <authorList>
            <person name="Park J.E."/>
            <person name="Lee J.A."/>
            <person name="Park S.G."/>
            <person name="Lee D.H."/>
            <person name="Kim S.J."/>
            <person name="Kim H.J."/>
            <person name="Uchida C."/>
            <person name="Uchida T."/>
            <person name="Park B.C."/>
            <person name="Cho S."/>
        </authorList>
    </citation>
    <scope>INTERACTION WITH PIN1</scope>
    <scope>CATALYTIC ACTIVITY</scope>
</reference>
<reference key="29">
    <citation type="journal article" date="2012" name="EMBO Rep.">
        <title>JNK regulates the photic response of the mammalian circadian clock.</title>
        <authorList>
            <person name="Yoshitane H."/>
            <person name="Honma S."/>
            <person name="Imamura K."/>
            <person name="Nakajima H."/>
            <person name="Nishide S.Y."/>
            <person name="Ono D."/>
            <person name="Kiyota H."/>
            <person name="Shinozaki N."/>
            <person name="Matsuki H."/>
            <person name="Wada N."/>
            <person name="Doi H."/>
            <person name="Hamada T."/>
            <person name="Honma K."/>
            <person name="Fukada Y."/>
        </authorList>
    </citation>
    <scope>FUNCTION</scope>
    <scope>CATALYTIC ACTIVITY</scope>
</reference>
<reference key="30">
    <citation type="journal article" date="2011" name="Int. J. Biochem. Cell Biol.">
        <title>Phosphorylation of Bcl-associated death protein (Bad) by erythropoietin-activated c-Jun N-terminal protein kinase 1 contributes to survival of erythropoietin-dependent cells.</title>
        <authorList>
            <person name="Deng H."/>
            <person name="Zhang J."/>
            <person name="Yoon T."/>
            <person name="Song D."/>
            <person name="Li D."/>
            <person name="Lin A."/>
        </authorList>
    </citation>
    <scope>FUNCTION IN PHOSPHORYLATION OF BAD</scope>
    <scope>CATALYTIC ACTIVITY</scope>
</reference>
<reference key="31">
    <citation type="journal article" date="2011" name="Mol. Biol. Cell">
        <title>Defective anchoring of JNK1 in the cytoplasm by MKK7 in Jurkat cells is associated with resistance to Fas-mediated apoptosis.</title>
        <authorList>
            <person name="Wang J."/>
            <person name="Tang R."/>
            <person name="Lv M."/>
            <person name="Wang Q."/>
            <person name="Zhang X."/>
            <person name="Guo Y."/>
            <person name="Chang H."/>
            <person name="Qiao C."/>
            <person name="Xiao H."/>
            <person name="Li X."/>
            <person name="Li Y."/>
            <person name="Shen B."/>
            <person name="Zhang J."/>
        </authorList>
    </citation>
    <scope>SUBCELLULAR LOCATION</scope>
</reference>
<reference key="32">
    <citation type="journal article" date="2011" name="Mol. Cell">
        <title>JNK1 phosphorylation of Cdt1 inhibits recruitment of HBO1 histone acetylase and blocks replication licensing in response to stress.</title>
        <authorList>
            <person name="Miotto B."/>
            <person name="Struhl K."/>
        </authorList>
    </citation>
    <scope>FUNCTION IN PHOSPHORYLATION OF CDT1</scope>
    <scope>CATALYTIC ACTIVITY</scope>
</reference>
<reference key="33">
    <citation type="journal article" date="2012" name="Mol. Cell. Biol.">
        <title>Phosphorylation of the eukaryotic translation initiation factor 4E-transporter (4E-T) by c-Jun N-terminal kinase promotes stress-dependent P-body assembly.</title>
        <authorList>
            <person name="Cargnello M."/>
            <person name="Tcherkezian J."/>
            <person name="Dorn J.F."/>
            <person name="Huttlin E.L."/>
            <person name="Maddox P.S."/>
            <person name="Gygi S.P."/>
            <person name="Roux P.P."/>
        </authorList>
    </citation>
    <scope>FUNCTION</scope>
    <scope>CATALYTIC ACTIVITY</scope>
    <scope>MUTAGENESIS OF LYS-55</scope>
</reference>
<reference key="34">
    <citation type="journal article" date="2012" name="Nature">
        <title>The same pocket in menin binds both MLL and JUND but has opposite effects on transcription.</title>
        <authorList>
            <person name="Huang J."/>
            <person name="Gurung B."/>
            <person name="Wan B."/>
            <person name="Matkar S."/>
            <person name="Veniaminova N.A."/>
            <person name="Wan K."/>
            <person name="Merchant J.L."/>
            <person name="Hua X."/>
            <person name="Lei M."/>
        </authorList>
    </citation>
    <scope>FUNCTION</scope>
</reference>
<reference key="35">
    <citation type="journal article" date="2016" name="Cell Rep.">
        <title>JNK phosphorylates SIRT6 to stimulate DNA double-strand break repair in response to oxidative stress by recruiting PARP1 to DNA Breaks.</title>
        <authorList>
            <person name="Van Meter M."/>
            <person name="Simon M."/>
            <person name="Tombline G."/>
            <person name="May A."/>
            <person name="Morello T.D."/>
            <person name="Hubbard B.P."/>
            <person name="Bredbenner K."/>
            <person name="Park R."/>
            <person name="Sinclair D.A."/>
            <person name="Bohr V.A."/>
            <person name="Gorbunova V."/>
            <person name="Seluanov A."/>
        </authorList>
    </citation>
    <scope>FUNCTION</scope>
    <scope>CATALYTIC ACTIVITY</scope>
</reference>
<reference key="36">
    <citation type="journal article" date="2017" name="Mol. Cell">
        <title>NLRP3 phosphorylation is an essential priming event for inflammasome activation.</title>
        <authorList>
            <person name="Song N."/>
            <person name="Liu Z.S."/>
            <person name="Xue W."/>
            <person name="Bai Z.F."/>
            <person name="Wang Q.Y."/>
            <person name="Dai J."/>
            <person name="Liu X."/>
            <person name="Huang Y.J."/>
            <person name="Cai H."/>
            <person name="Zhan X.Y."/>
            <person name="Han Q.Y."/>
            <person name="Wang H."/>
            <person name="Chen Y."/>
            <person name="Li H.Y."/>
            <person name="Li A.L."/>
            <person name="Zhang X.M."/>
            <person name="Zhou T."/>
            <person name="Li T."/>
        </authorList>
    </citation>
    <scope>FUNCTION</scope>
    <scope>CATALYTIC ACTIVITY</scope>
    <scope>MUTAGENESIS OF LYS-55</scope>
</reference>
<reference key="37">
    <citation type="journal article" date="2019" name="J. Mol. Cell. Cardiol.">
        <title>MicroRNA-143-3p promotes human cardiac fibrosis via targeting sprouty3 after myocardial infarction.</title>
        <authorList>
            <person name="Li C."/>
            <person name="Li J."/>
            <person name="Xue K."/>
            <person name="Zhang J."/>
            <person name="Wang C."/>
            <person name="Zhang Q."/>
            <person name="Chen X."/>
            <person name="Gao C."/>
            <person name="Yu X."/>
            <person name="Sun L."/>
        </authorList>
    </citation>
    <scope>SUBCELLULAR LOCATION</scope>
</reference>
<reference key="38">
    <citation type="journal article" date="2021" name="Nucleic Acids Res.">
        <title>Post-translational modification of RNA m6A demethylase ALKBH5 regulates ROS-induced DNA damage response.</title>
        <authorList>
            <person name="Yu F."/>
            <person name="Wei J."/>
            <person name="Cui X."/>
            <person name="Yu C."/>
            <person name="Ni W."/>
            <person name="Bungert J."/>
            <person name="Wu L."/>
            <person name="He C."/>
            <person name="Qian Z."/>
        </authorList>
    </citation>
    <scope>FUNCTION</scope>
    <scope>CATALYTIC ACTIVITY</scope>
</reference>
<reference key="39">
    <citation type="journal article" date="2004" name="EMBO J.">
        <title>Structural basis for the selective inhibition of JNK1 by the scaffolding protein JIP1 and SP600125.</title>
        <authorList>
            <person name="Heo Y.S."/>
            <person name="Kim S.K."/>
            <person name="Seo C.I."/>
            <person name="Kim Y.K."/>
            <person name="Sung B.J."/>
            <person name="Lee H.S."/>
            <person name="Lee J.I."/>
            <person name="Park S.Y."/>
            <person name="Kim J.H."/>
            <person name="Hwang K.Y."/>
            <person name="Hyun Y.L."/>
            <person name="Jeon Y.H."/>
            <person name="Ro S."/>
            <person name="Cho J.M."/>
            <person name="Lee T.G."/>
            <person name="Yang C.H."/>
        </authorList>
    </citation>
    <scope>X-RAY CRYSTALLOGRAPHY (2.35 ANGSTROMS) OF 1-363</scope>
    <scope>CATALYTIC ACTIVITY</scope>
</reference>
<reference key="40">
    <citation type="journal article" date="2007" name="Nature">
        <title>Patterns of somatic mutation in human cancer genomes.</title>
        <authorList>
            <person name="Greenman C."/>
            <person name="Stephens P."/>
            <person name="Smith R."/>
            <person name="Dalgliesh G.L."/>
            <person name="Hunter C."/>
            <person name="Bignell G."/>
            <person name="Davies H."/>
            <person name="Teague J."/>
            <person name="Butler A."/>
            <person name="Stevens C."/>
            <person name="Edkins S."/>
            <person name="O'Meara S."/>
            <person name="Vastrik I."/>
            <person name="Schmidt E.E."/>
            <person name="Avis T."/>
            <person name="Barthorpe S."/>
            <person name="Bhamra G."/>
            <person name="Buck G."/>
            <person name="Choudhury B."/>
            <person name="Clements J."/>
            <person name="Cole J."/>
            <person name="Dicks E."/>
            <person name="Forbes S."/>
            <person name="Gray K."/>
            <person name="Halliday K."/>
            <person name="Harrison R."/>
            <person name="Hills K."/>
            <person name="Hinton J."/>
            <person name="Jenkinson A."/>
            <person name="Jones D."/>
            <person name="Menzies A."/>
            <person name="Mironenko T."/>
            <person name="Perry J."/>
            <person name="Raine K."/>
            <person name="Richardson D."/>
            <person name="Shepherd R."/>
            <person name="Small A."/>
            <person name="Tofts C."/>
            <person name="Varian J."/>
            <person name="Webb T."/>
            <person name="West S."/>
            <person name="Widaa S."/>
            <person name="Yates A."/>
            <person name="Cahill D.P."/>
            <person name="Louis D.N."/>
            <person name="Goldstraw P."/>
            <person name="Nicholson A.G."/>
            <person name="Brasseur F."/>
            <person name="Looijenga L."/>
            <person name="Weber B.L."/>
            <person name="Chiew Y.-E."/>
            <person name="DeFazio A."/>
            <person name="Greaves M.F."/>
            <person name="Green A.R."/>
            <person name="Campbell P."/>
            <person name="Birney E."/>
            <person name="Easton D.F."/>
            <person name="Chenevix-Trench G."/>
            <person name="Tan M.-H."/>
            <person name="Khoo S.K."/>
            <person name="Teh B.T."/>
            <person name="Yuen S.T."/>
            <person name="Leung S.Y."/>
            <person name="Wooster R."/>
            <person name="Futreal P.A."/>
            <person name="Stratton M.R."/>
        </authorList>
    </citation>
    <scope>VARIANTS [LARGE SCALE ANALYSIS] SER-171 AND ARG-177</scope>
</reference>
<gene>
    <name type="primary">MAPK8</name>
    <name evidence="38" type="synonym">JNK1</name>
    <name type="synonym">PRKM8</name>
    <name type="synonym">SAPK1</name>
    <name type="synonym">SAPK1C</name>
</gene>
<organism>
    <name type="scientific">Homo sapiens</name>
    <name type="common">Human</name>
    <dbReference type="NCBI Taxonomy" id="9606"/>
    <lineage>
        <taxon>Eukaryota</taxon>
        <taxon>Metazoa</taxon>
        <taxon>Chordata</taxon>
        <taxon>Craniata</taxon>
        <taxon>Vertebrata</taxon>
        <taxon>Euteleostomi</taxon>
        <taxon>Mammalia</taxon>
        <taxon>Eutheria</taxon>
        <taxon>Euarchontoglires</taxon>
        <taxon>Primates</taxon>
        <taxon>Haplorrhini</taxon>
        <taxon>Catarrhini</taxon>
        <taxon>Hominidae</taxon>
        <taxon>Homo</taxon>
    </lineage>
</organism>
<accession>P45983</accession>
<accession>B5BTZ5</accession>
<accession>B7ZLV4</accession>
<accession>D3DX88</accession>
<accession>D3DX92</accession>
<accession>Q15709</accession>
<accession>Q15712</accession>
<accession>Q15713</accession>
<accession>Q308M2</accession>
<dbReference type="EC" id="2.7.11.24" evidence="6 7 8 12 14 17 35"/>
<dbReference type="EMBL" id="L26318">
    <property type="protein sequence ID" value="AAA36131.1"/>
    <property type="molecule type" value="mRNA"/>
</dbReference>
<dbReference type="EMBL" id="U34822">
    <property type="protein sequence ID" value="AAC50607.1"/>
    <property type="molecule type" value="mRNA"/>
</dbReference>
<dbReference type="EMBL" id="U35004">
    <property type="protein sequence ID" value="AAC50610.1"/>
    <property type="molecule type" value="mRNA"/>
</dbReference>
<dbReference type="EMBL" id="U35005">
    <property type="protein sequence ID" value="AAC50611.1"/>
    <property type="molecule type" value="mRNA"/>
</dbReference>
<dbReference type="EMBL" id="DQ234352">
    <property type="protein sequence ID" value="ABB29981.1"/>
    <property type="molecule type" value="mRNA"/>
</dbReference>
<dbReference type="EMBL" id="AC016397">
    <property type="status" value="NOT_ANNOTATED_CDS"/>
    <property type="molecule type" value="Genomic_DNA"/>
</dbReference>
<dbReference type="EMBL" id="AC074325">
    <property type="status" value="NOT_ANNOTATED_CDS"/>
    <property type="molecule type" value="Genomic_DNA"/>
</dbReference>
<dbReference type="EMBL" id="AB451231">
    <property type="protein sequence ID" value="BAG70045.1"/>
    <property type="molecule type" value="mRNA"/>
</dbReference>
<dbReference type="EMBL" id="CH471187">
    <property type="protein sequence ID" value="EAW93132.1"/>
    <property type="molecule type" value="Genomic_DNA"/>
</dbReference>
<dbReference type="EMBL" id="CH471187">
    <property type="protein sequence ID" value="EAW93129.1"/>
    <property type="molecule type" value="Genomic_DNA"/>
</dbReference>
<dbReference type="EMBL" id="CH471187">
    <property type="protein sequence ID" value="EAW93130.1"/>
    <property type="molecule type" value="Genomic_DNA"/>
</dbReference>
<dbReference type="EMBL" id="CH471187">
    <property type="protein sequence ID" value="EAW93133.1"/>
    <property type="molecule type" value="Genomic_DNA"/>
</dbReference>
<dbReference type="EMBL" id="CH471187">
    <property type="protein sequence ID" value="EAW93134.1"/>
    <property type="molecule type" value="Genomic_DNA"/>
</dbReference>
<dbReference type="EMBL" id="CH471187">
    <property type="protein sequence ID" value="EAW93136.1"/>
    <property type="molecule type" value="Genomic_DNA"/>
</dbReference>
<dbReference type="EMBL" id="BC144063">
    <property type="protein sequence ID" value="AAI44064.1"/>
    <property type="molecule type" value="mRNA"/>
</dbReference>
<dbReference type="CCDS" id="CCDS60527.1">
    <molecule id="P45983-5"/>
</dbReference>
<dbReference type="CCDS" id="CCDS7223.1">
    <molecule id="P45983-4"/>
</dbReference>
<dbReference type="CCDS" id="CCDS7224.1">
    <molecule id="P45983-1"/>
</dbReference>
<dbReference type="CCDS" id="CCDS7225.1">
    <molecule id="P45983-2"/>
</dbReference>
<dbReference type="CCDS" id="CCDS7226.1">
    <molecule id="P45983-3"/>
</dbReference>
<dbReference type="PIR" id="S71097">
    <property type="entry name" value="S71097"/>
</dbReference>
<dbReference type="PIR" id="S71099">
    <property type="entry name" value="S71099"/>
</dbReference>
<dbReference type="RefSeq" id="NP_001265476.1">
    <molecule id="P45983-4"/>
    <property type="nucleotide sequence ID" value="NM_001278547.2"/>
</dbReference>
<dbReference type="RefSeq" id="NP_001265477.1">
    <molecule id="P45983-5"/>
    <property type="nucleotide sequence ID" value="NM_001278548.2"/>
</dbReference>
<dbReference type="RefSeq" id="NP_001310231.1">
    <molecule id="P45983-2"/>
    <property type="nucleotide sequence ID" value="NM_001323302.2"/>
</dbReference>
<dbReference type="RefSeq" id="NP_001310250.1">
    <molecule id="P45983-3"/>
    <property type="nucleotide sequence ID" value="NM_001323321.2"/>
</dbReference>
<dbReference type="RefSeq" id="NP_001310251.1">
    <molecule id="P45983-4"/>
    <property type="nucleotide sequence ID" value="NM_001323322.2"/>
</dbReference>
<dbReference type="RefSeq" id="NP_001310252.1">
    <molecule id="P45983-4"/>
    <property type="nucleotide sequence ID" value="NM_001323323.2"/>
</dbReference>
<dbReference type="RefSeq" id="NP_001310253.1">
    <molecule id="P45983-2"/>
    <property type="nucleotide sequence ID" value="NM_001323324.2"/>
</dbReference>
<dbReference type="RefSeq" id="NP_001310254.1">
    <molecule id="P45983-3"/>
    <property type="nucleotide sequence ID" value="NM_001323325.2"/>
</dbReference>
<dbReference type="RefSeq" id="NP_001310255.1">
    <molecule id="P45983-2"/>
    <property type="nucleotide sequence ID" value="NM_001323326.2"/>
</dbReference>
<dbReference type="RefSeq" id="NP_001310256.1">
    <molecule id="P45983-2"/>
    <property type="nucleotide sequence ID" value="NM_001323327.2"/>
</dbReference>
<dbReference type="RefSeq" id="NP_001310257.1">
    <molecule id="P45983-1"/>
    <property type="nucleotide sequence ID" value="NM_001323328.2"/>
</dbReference>
<dbReference type="RefSeq" id="NP_001310258.1">
    <molecule id="P45983-1"/>
    <property type="nucleotide sequence ID" value="NM_001323329.2"/>
</dbReference>
<dbReference type="RefSeq" id="NP_001310259.1">
    <molecule id="P45983-4"/>
    <property type="nucleotide sequence ID" value="NM_001323330.2"/>
</dbReference>
<dbReference type="RefSeq" id="NP_001310260.1">
    <molecule id="P45983-1"/>
    <property type="nucleotide sequence ID" value="NM_001323331.2"/>
</dbReference>
<dbReference type="RefSeq" id="NP_620634.1">
    <molecule id="P45983-3"/>
    <property type="nucleotide sequence ID" value="NM_139046.4"/>
</dbReference>
<dbReference type="RefSeq" id="NP_620637.1">
    <molecule id="P45983-1"/>
    <property type="nucleotide sequence ID" value="NM_139049.4"/>
</dbReference>
<dbReference type="RefSeq" id="XP_024303847.1">
    <molecule id="P45983-4"/>
    <property type="nucleotide sequence ID" value="XM_024448079.2"/>
</dbReference>
<dbReference type="RefSeq" id="XP_024303848.1">
    <molecule id="P45983-3"/>
    <property type="nucleotide sequence ID" value="XM_024448080.2"/>
</dbReference>
<dbReference type="RefSeq" id="XP_047281436.1">
    <molecule id="P45983-4"/>
    <property type="nucleotide sequence ID" value="XM_047425480.1"/>
</dbReference>
<dbReference type="RefSeq" id="XP_047281437.1">
    <molecule id="P45983-4"/>
    <property type="nucleotide sequence ID" value="XM_047425481.1"/>
</dbReference>
<dbReference type="RefSeq" id="XP_047281438.1">
    <molecule id="P45983-3"/>
    <property type="nucleotide sequence ID" value="XM_047425482.1"/>
</dbReference>
<dbReference type="RefSeq" id="XP_047281440.1">
    <molecule id="P45983-3"/>
    <property type="nucleotide sequence ID" value="XM_047425484.1"/>
</dbReference>
<dbReference type="RefSeq" id="XP_054222274.1">
    <molecule id="P45983-4"/>
    <property type="nucleotide sequence ID" value="XM_054366299.1"/>
</dbReference>
<dbReference type="RefSeq" id="XP_054222275.1">
    <molecule id="P45983-4"/>
    <property type="nucleotide sequence ID" value="XM_054366300.1"/>
</dbReference>
<dbReference type="RefSeq" id="XP_054222276.1">
    <molecule id="P45983-4"/>
    <property type="nucleotide sequence ID" value="XM_054366301.1"/>
</dbReference>
<dbReference type="RefSeq" id="XP_054222277.1">
    <molecule id="P45983-3"/>
    <property type="nucleotide sequence ID" value="XM_054366302.1"/>
</dbReference>
<dbReference type="RefSeq" id="XP_054222278.1">
    <molecule id="P45983-3"/>
    <property type="nucleotide sequence ID" value="XM_054366303.1"/>
</dbReference>
<dbReference type="RefSeq" id="XP_054222279.1">
    <molecule id="P45983-3"/>
    <property type="nucleotide sequence ID" value="XM_054366304.1"/>
</dbReference>
<dbReference type="PDB" id="1UKH">
    <property type="method" value="X-ray"/>
    <property type="resolution" value="2.35 A"/>
    <property type="chains" value="A=1-363"/>
</dbReference>
<dbReference type="PDB" id="1UKI">
    <property type="method" value="X-ray"/>
    <property type="resolution" value="2.70 A"/>
    <property type="chains" value="A=1-363"/>
</dbReference>
<dbReference type="PDB" id="2G01">
    <property type="method" value="X-ray"/>
    <property type="resolution" value="3.50 A"/>
    <property type="chains" value="A/B=1-364"/>
</dbReference>
<dbReference type="PDB" id="2GMX">
    <property type="method" value="X-ray"/>
    <property type="resolution" value="3.50 A"/>
    <property type="chains" value="A/B=1-364"/>
</dbReference>
<dbReference type="PDB" id="2H96">
    <property type="method" value="X-ray"/>
    <property type="resolution" value="3.00 A"/>
    <property type="chains" value="A/B=1-364"/>
</dbReference>
<dbReference type="PDB" id="2NO3">
    <property type="method" value="X-ray"/>
    <property type="resolution" value="3.20 A"/>
    <property type="chains" value="A/B=1-364"/>
</dbReference>
<dbReference type="PDB" id="2XRW">
    <property type="method" value="X-ray"/>
    <property type="resolution" value="1.33 A"/>
    <property type="chains" value="A=2-364"/>
</dbReference>
<dbReference type="PDB" id="2XS0">
    <property type="method" value="X-ray"/>
    <property type="resolution" value="2.60 A"/>
    <property type="chains" value="A=1-379"/>
</dbReference>
<dbReference type="PDB" id="3ELJ">
    <property type="method" value="X-ray"/>
    <property type="resolution" value="1.80 A"/>
    <property type="chains" value="A=1-364"/>
</dbReference>
<dbReference type="PDB" id="3O17">
    <property type="method" value="X-ray"/>
    <property type="resolution" value="3.00 A"/>
    <property type="chains" value="A/B=1-364"/>
</dbReference>
<dbReference type="PDB" id="3O2M">
    <property type="method" value="X-ray"/>
    <property type="resolution" value="2.70 A"/>
    <property type="chains" value="A/B=1-364"/>
</dbReference>
<dbReference type="PDB" id="3PZE">
    <property type="method" value="X-ray"/>
    <property type="resolution" value="2.00 A"/>
    <property type="chains" value="A=7-364"/>
</dbReference>
<dbReference type="PDB" id="3V3V">
    <property type="method" value="X-ray"/>
    <property type="resolution" value="2.70 A"/>
    <property type="chains" value="A=1-366"/>
</dbReference>
<dbReference type="PDB" id="3VUD">
    <property type="method" value="X-ray"/>
    <property type="resolution" value="3.50 A"/>
    <property type="chains" value="A=1-364"/>
</dbReference>
<dbReference type="PDB" id="3VUG">
    <property type="method" value="X-ray"/>
    <property type="resolution" value="3.24 A"/>
    <property type="chains" value="A=1-364"/>
</dbReference>
<dbReference type="PDB" id="3VUH">
    <property type="method" value="X-ray"/>
    <property type="resolution" value="2.70 A"/>
    <property type="chains" value="A=1-364"/>
</dbReference>
<dbReference type="PDB" id="3VUI">
    <property type="method" value="X-ray"/>
    <property type="resolution" value="2.80 A"/>
    <property type="chains" value="A=1-364"/>
</dbReference>
<dbReference type="PDB" id="3VUK">
    <property type="method" value="X-ray"/>
    <property type="resolution" value="2.95 A"/>
    <property type="chains" value="A=1-364"/>
</dbReference>
<dbReference type="PDB" id="3VUL">
    <property type="method" value="X-ray"/>
    <property type="resolution" value="2.81 A"/>
    <property type="chains" value="A=1-364"/>
</dbReference>
<dbReference type="PDB" id="3VUM">
    <property type="method" value="X-ray"/>
    <property type="resolution" value="2.69 A"/>
    <property type="chains" value="A=1-364"/>
</dbReference>
<dbReference type="PDB" id="4AWI">
    <property type="method" value="X-ray"/>
    <property type="resolution" value="1.91 A"/>
    <property type="chains" value="A=1-364"/>
</dbReference>
<dbReference type="PDB" id="4E73">
    <property type="method" value="X-ray"/>
    <property type="resolution" value="2.27 A"/>
    <property type="chains" value="A=1-363"/>
</dbReference>
<dbReference type="PDB" id="4G1W">
    <property type="method" value="X-ray"/>
    <property type="resolution" value="2.45 A"/>
    <property type="chains" value="A=1-363"/>
</dbReference>
<dbReference type="PDB" id="4HYS">
    <property type="method" value="X-ray"/>
    <property type="resolution" value="2.42 A"/>
    <property type="chains" value="A=1-363"/>
</dbReference>
<dbReference type="PDB" id="4HYU">
    <property type="method" value="X-ray"/>
    <property type="resolution" value="2.15 A"/>
    <property type="chains" value="A=1-363"/>
</dbReference>
<dbReference type="PDB" id="4IZY">
    <property type="method" value="X-ray"/>
    <property type="resolution" value="2.30 A"/>
    <property type="chains" value="A=1-363"/>
</dbReference>
<dbReference type="PDB" id="4L7F">
    <property type="method" value="X-ray"/>
    <property type="resolution" value="1.95 A"/>
    <property type="chains" value="A=7-362"/>
</dbReference>
<dbReference type="PDB" id="4QTD">
    <property type="method" value="X-ray"/>
    <property type="resolution" value="1.50 A"/>
    <property type="chains" value="A=1-363"/>
</dbReference>
<dbReference type="PDB" id="4UX9">
    <property type="method" value="X-ray"/>
    <property type="resolution" value="2.34 A"/>
    <property type="chains" value="A/B/C/D=1-364"/>
</dbReference>
<dbReference type="PDB" id="4YR8">
    <property type="method" value="X-ray"/>
    <property type="resolution" value="2.40 A"/>
    <property type="chains" value="A/C/E/F=1-363"/>
</dbReference>
<dbReference type="PDB" id="5LW1">
    <property type="method" value="X-ray"/>
    <property type="resolution" value="3.20 A"/>
    <property type="chains" value="B/E/H=2-363"/>
</dbReference>
<dbReference type="PDB" id="6F5E">
    <property type="method" value="X-ray"/>
    <property type="resolution" value="2.70 A"/>
    <property type="chains" value="B=2-363"/>
</dbReference>
<dbReference type="PDB" id="6ZR5">
    <property type="method" value="X-ray"/>
    <property type="resolution" value="2.70 A"/>
    <property type="chains" value="A/B=1-364"/>
</dbReference>
<dbReference type="PDB" id="8PT8">
    <property type="method" value="X-ray"/>
    <property type="resolution" value="2.78 A"/>
    <property type="chains" value="A/B/C=1-364"/>
</dbReference>
<dbReference type="PDB" id="8PT9">
    <property type="method" value="X-ray"/>
    <property type="resolution" value="2.70 A"/>
    <property type="chains" value="A/B/C=1-364"/>
</dbReference>
<dbReference type="PDB" id="8PTA">
    <property type="method" value="X-ray"/>
    <property type="resolution" value="2.41 A"/>
    <property type="chains" value="A/B/C=1-364"/>
</dbReference>
<dbReference type="PDB" id="8R5E">
    <property type="method" value="X-ray"/>
    <property type="resolution" value="1.70 A"/>
    <property type="chains" value="A=1-364"/>
</dbReference>
<dbReference type="PDB" id="8X5M">
    <property type="method" value="X-ray"/>
    <property type="resolution" value="2.00 A"/>
    <property type="chains" value="A=2-364"/>
</dbReference>
<dbReference type="PDB" id="9FT9">
    <property type="method" value="X-ray"/>
    <property type="resolution" value="2.35 A"/>
    <property type="chains" value="A=5-364"/>
</dbReference>
<dbReference type="PDBsum" id="1UKH"/>
<dbReference type="PDBsum" id="1UKI"/>
<dbReference type="PDBsum" id="2G01"/>
<dbReference type="PDBsum" id="2GMX"/>
<dbReference type="PDBsum" id="2H96"/>
<dbReference type="PDBsum" id="2NO3"/>
<dbReference type="PDBsum" id="2XRW"/>
<dbReference type="PDBsum" id="2XS0"/>
<dbReference type="PDBsum" id="3ELJ"/>
<dbReference type="PDBsum" id="3O17"/>
<dbReference type="PDBsum" id="3O2M"/>
<dbReference type="PDBsum" id="3PZE"/>
<dbReference type="PDBsum" id="3V3V"/>
<dbReference type="PDBsum" id="3VUD"/>
<dbReference type="PDBsum" id="3VUG"/>
<dbReference type="PDBsum" id="3VUH"/>
<dbReference type="PDBsum" id="3VUI"/>
<dbReference type="PDBsum" id="3VUK"/>
<dbReference type="PDBsum" id="3VUL"/>
<dbReference type="PDBsum" id="3VUM"/>
<dbReference type="PDBsum" id="4AWI"/>
<dbReference type="PDBsum" id="4E73"/>
<dbReference type="PDBsum" id="4G1W"/>
<dbReference type="PDBsum" id="4HYS"/>
<dbReference type="PDBsum" id="4HYU"/>
<dbReference type="PDBsum" id="4IZY"/>
<dbReference type="PDBsum" id="4L7F"/>
<dbReference type="PDBsum" id="4QTD"/>
<dbReference type="PDBsum" id="4UX9"/>
<dbReference type="PDBsum" id="4YR8"/>
<dbReference type="PDBsum" id="5LW1"/>
<dbReference type="PDBsum" id="6F5E"/>
<dbReference type="PDBsum" id="6ZR5"/>
<dbReference type="PDBsum" id="8PT8"/>
<dbReference type="PDBsum" id="8PT9"/>
<dbReference type="PDBsum" id="8PTA"/>
<dbReference type="PDBsum" id="8R5E"/>
<dbReference type="PDBsum" id="8X5M"/>
<dbReference type="PDBsum" id="9FT9"/>
<dbReference type="SMR" id="P45983"/>
<dbReference type="BioGRID" id="111585">
    <property type="interactions" value="242"/>
</dbReference>
<dbReference type="DIP" id="DIP-249N"/>
<dbReference type="ELM" id="P45983"/>
<dbReference type="FunCoup" id="P45983">
    <property type="interactions" value="3297"/>
</dbReference>
<dbReference type="IntAct" id="P45983">
    <property type="interactions" value="130"/>
</dbReference>
<dbReference type="MINT" id="P45983"/>
<dbReference type="STRING" id="9606.ENSP00000378974"/>
<dbReference type="BindingDB" id="P45983"/>
<dbReference type="ChEMBL" id="CHEMBL2276"/>
<dbReference type="DrugBank" id="DB07268">
    <property type="generic name" value="2-({2-[(3-HYDROXYPHENYL)AMINO]PYRIMIDIN-4-YL}AMINO)BENZAMIDE"/>
</dbReference>
<dbReference type="DrugBank" id="DB07845">
    <property type="generic name" value="2-fluoro-6-{[2-({2-methoxy-4-[(methylsulfonyl)methyl]phenyl}amino)-7H-pyrrolo[2,3-d]pyrimidin-4-yl]amino}benzamide"/>
</dbReference>
<dbReference type="DrugBank" id="DB07276">
    <property type="generic name" value="5-CYANO-N-(2,5-DIMETHOXYBENZYL)-6-ETHOXYPYRIDINE-2-CARBOXAMIDE"/>
</dbReference>
<dbReference type="DrugBank" id="DB07218">
    <property type="generic name" value="6-CHLORO-9-HYDROXY-1,3-DIMETHYL-1,9-DIHYDRO-4H-PYRAZOLO[3,4-B]QUINOLIN-4-ONE"/>
</dbReference>
<dbReference type="DrugBank" id="DB03777">
    <property type="generic name" value="Bisindolylmaleimide I"/>
</dbReference>
<dbReference type="DrugBank" id="DB12432">
    <property type="generic name" value="CC-401"/>
</dbReference>
<dbReference type="DrugBank" id="DB12429">
    <property type="generic name" value="CI-1040"/>
</dbReference>
<dbReference type="DrugBank" id="DB05660">
    <property type="generic name" value="D-JNKI-1"/>
</dbReference>
<dbReference type="DrugBank" id="DB11718">
    <property type="generic name" value="Encorafenib"/>
</dbReference>
<dbReference type="DrugBank" id="DB15624">
    <property type="generic name" value="Halicin"/>
</dbReference>
<dbReference type="DrugBank" id="DB01017">
    <property type="generic name" value="Minocycline"/>
</dbReference>
<dbReference type="DrugBank" id="DB07272">
    <property type="generic name" value="N-(4-AMINO-5-CYANO-6-ETHOXYPYRIDIN-2-YL)-2-(4-BROMO-2,5-DIMETHOXYPHENYL)ACETAMIDE"/>
</dbReference>
<dbReference type="DrugBank" id="DB16995">
    <property type="generic name" value="NP-51"/>
</dbReference>
<dbReference type="DrugBank" id="DB01782">
    <property type="generic name" value="Pyrazolanthrone"/>
</dbReference>
<dbReference type="DrugBank" id="DB00675">
    <property type="generic name" value="Tamoxifen"/>
</dbReference>
<dbReference type="DrugBank" id="DB11798">
    <property type="generic name" value="Tanzisertib"/>
</dbReference>
<dbReference type="DrugBank" id="DB04462">
    <property type="generic name" value="Tetrabromo-2-Benzotriazole"/>
</dbReference>
<dbReference type="DrugCentral" id="P45983"/>
<dbReference type="GuidetoPHARMACOLOGY" id="1496"/>
<dbReference type="GlyGen" id="P45983">
    <property type="glycosylation" value="1 site"/>
</dbReference>
<dbReference type="iPTMnet" id="P45983"/>
<dbReference type="PhosphoSitePlus" id="P45983"/>
<dbReference type="BioMuta" id="MAPK8"/>
<dbReference type="DMDM" id="2507195"/>
<dbReference type="CPTAC" id="CPTAC-3144"/>
<dbReference type="CPTAC" id="CPTAC-3145"/>
<dbReference type="CPTAC" id="CPTAC-5792"/>
<dbReference type="CPTAC" id="CPTAC-889"/>
<dbReference type="CPTAC" id="CPTAC-890"/>
<dbReference type="CPTAC" id="CPTAC-891"/>
<dbReference type="CPTAC" id="CPTAC-892"/>
<dbReference type="CPTAC" id="non-CPTAC-5407"/>
<dbReference type="CPTAC" id="non-CPTAC-5706"/>
<dbReference type="CPTAC" id="non-CPTAC-5707"/>
<dbReference type="jPOST" id="P45983"/>
<dbReference type="MassIVE" id="P45983"/>
<dbReference type="PaxDb" id="9606-ENSP00000378974"/>
<dbReference type="PeptideAtlas" id="P45983"/>
<dbReference type="ProteomicsDB" id="55694">
    <molecule id="P45983-1"/>
</dbReference>
<dbReference type="ProteomicsDB" id="55695">
    <molecule id="P45983-2"/>
</dbReference>
<dbReference type="ProteomicsDB" id="55696">
    <molecule id="P45983-3"/>
</dbReference>
<dbReference type="ProteomicsDB" id="55697">
    <molecule id="P45983-4"/>
</dbReference>
<dbReference type="ProteomicsDB" id="61569"/>
<dbReference type="Pumba" id="P45983"/>
<dbReference type="Antibodypedia" id="3846">
    <property type="antibodies" value="1678 antibodies from 48 providers"/>
</dbReference>
<dbReference type="CPTC" id="P45983">
    <property type="antibodies" value="1 antibody"/>
</dbReference>
<dbReference type="DNASU" id="5599"/>
<dbReference type="Ensembl" id="ENST00000360332.7">
    <molecule id="P45983-5"/>
    <property type="protein sequence ID" value="ENSP00000353483.4"/>
    <property type="gene ID" value="ENSG00000107643.17"/>
</dbReference>
<dbReference type="Ensembl" id="ENST00000374176.8">
    <molecule id="P45983-4"/>
    <property type="protein sequence ID" value="ENSP00000363291.4"/>
    <property type="gene ID" value="ENSG00000107643.17"/>
</dbReference>
<dbReference type="Ensembl" id="ENST00000374179.8">
    <molecule id="P45983-3"/>
    <property type="protein sequence ID" value="ENSP00000363294.3"/>
    <property type="gene ID" value="ENSG00000107643.17"/>
</dbReference>
<dbReference type="Ensembl" id="ENST00000374182.7">
    <molecule id="P45983-2"/>
    <property type="protein sequence ID" value="ENSP00000363297.3"/>
    <property type="gene ID" value="ENSG00000107643.17"/>
</dbReference>
<dbReference type="Ensembl" id="ENST00000374189.6">
    <molecule id="P45983-1"/>
    <property type="protein sequence ID" value="ENSP00000363304.1"/>
    <property type="gene ID" value="ENSG00000107643.17"/>
</dbReference>
<dbReference type="Ensembl" id="ENST00000395611.7">
    <molecule id="P45983-4"/>
    <property type="protein sequence ID" value="ENSP00000378974.4"/>
    <property type="gene ID" value="ENSG00000107643.17"/>
</dbReference>
<dbReference type="GeneID" id="5599"/>
<dbReference type="KEGG" id="hsa:5599"/>
<dbReference type="MANE-Select" id="ENST00000374189.6">
    <property type="protein sequence ID" value="ENSP00000363304.1"/>
    <property type="RefSeq nucleotide sequence ID" value="NM_001323329.2"/>
    <property type="RefSeq protein sequence ID" value="NP_001310258.1"/>
</dbReference>
<dbReference type="UCSC" id="uc001jgm.5">
    <molecule id="P45983-1"/>
    <property type="organism name" value="human"/>
</dbReference>
<dbReference type="AGR" id="HGNC:6881"/>
<dbReference type="CTD" id="5599"/>
<dbReference type="DisGeNET" id="5599"/>
<dbReference type="GeneCards" id="MAPK8"/>
<dbReference type="HGNC" id="HGNC:6881">
    <property type="gene designation" value="MAPK8"/>
</dbReference>
<dbReference type="HPA" id="ENSG00000107643">
    <property type="expression patterns" value="Low tissue specificity"/>
</dbReference>
<dbReference type="MIM" id="601158">
    <property type="type" value="gene"/>
</dbReference>
<dbReference type="neXtProt" id="NX_P45983"/>
<dbReference type="OpenTargets" id="ENSG00000107643"/>
<dbReference type="PharmGKB" id="PA283"/>
<dbReference type="VEuPathDB" id="HostDB:ENSG00000107643"/>
<dbReference type="eggNOG" id="KOG0665">
    <property type="taxonomic scope" value="Eukaryota"/>
</dbReference>
<dbReference type="GeneTree" id="ENSGT00940000153692"/>
<dbReference type="InParanoid" id="P45983"/>
<dbReference type="OMA" id="AMDMWAV"/>
<dbReference type="OrthoDB" id="192887at2759"/>
<dbReference type="PAN-GO" id="P45983">
    <property type="GO annotations" value="6 GO annotations based on evolutionary models"/>
</dbReference>
<dbReference type="PhylomeDB" id="P45983"/>
<dbReference type="TreeFam" id="TF105100"/>
<dbReference type="BRENDA" id="2.7.11.24">
    <property type="organism ID" value="2681"/>
</dbReference>
<dbReference type="PathwayCommons" id="P45983"/>
<dbReference type="Reactome" id="R-HSA-111446">
    <property type="pathway name" value="Activation of BIM and translocation to mitochondria"/>
</dbReference>
<dbReference type="Reactome" id="R-HSA-139910">
    <property type="pathway name" value="Activation of BMF and translocation to mitochondria"/>
</dbReference>
<dbReference type="Reactome" id="R-HSA-193648">
    <property type="pathway name" value="NRAGE signals death through JNK"/>
</dbReference>
<dbReference type="Reactome" id="R-HSA-205043">
    <property type="pathway name" value="NRIF signals cell death from the nucleus"/>
</dbReference>
<dbReference type="Reactome" id="R-HSA-2559580">
    <property type="pathway name" value="Oxidative Stress Induced Senescence"/>
</dbReference>
<dbReference type="Reactome" id="R-HSA-2871796">
    <property type="pathway name" value="FCERI mediated MAPK activation"/>
</dbReference>
<dbReference type="Reactome" id="R-HSA-450321">
    <property type="pathway name" value="JNK (c-Jun kinases) phosphorylation and activation mediated by activated human TAK1"/>
</dbReference>
<dbReference type="Reactome" id="R-HSA-450341">
    <property type="pathway name" value="Activation of the AP-1 family of transcription factors"/>
</dbReference>
<dbReference type="Reactome" id="R-HSA-5693565">
    <property type="pathway name" value="Recruitment and ATM-mediated phosphorylation of repair and signaling proteins at DNA double strand breaks"/>
</dbReference>
<dbReference type="Reactome" id="R-HSA-9007892">
    <property type="pathway name" value="Interleukin-38 signaling"/>
</dbReference>
<dbReference type="Reactome" id="R-HSA-9673324">
    <property type="pathway name" value="WNT5:FZD7-mediated leishmania damping"/>
</dbReference>
<dbReference type="Reactome" id="R-HSA-9725370">
    <property type="pathway name" value="Signaling by ALK fusions and activated point mutants"/>
</dbReference>
<dbReference type="SignaLink" id="P45983"/>
<dbReference type="SIGNOR" id="P45983"/>
<dbReference type="BioGRID-ORCS" id="5599">
    <property type="hits" value="21 hits in 1196 CRISPR screens"/>
</dbReference>
<dbReference type="CD-CODE" id="232F8A39">
    <property type="entry name" value="P-body"/>
</dbReference>
<dbReference type="CD-CODE" id="8C2F96ED">
    <property type="entry name" value="Centrosome"/>
</dbReference>
<dbReference type="CD-CODE" id="DEE660B4">
    <property type="entry name" value="Stress granule"/>
</dbReference>
<dbReference type="ChiTaRS" id="MAPK8">
    <property type="organism name" value="human"/>
</dbReference>
<dbReference type="EvolutionaryTrace" id="P45983"/>
<dbReference type="GeneWiki" id="MAPK8"/>
<dbReference type="GenomeRNAi" id="5599"/>
<dbReference type="Pharos" id="P45983">
    <property type="development level" value="Tchem"/>
</dbReference>
<dbReference type="PRO" id="PR:P45983"/>
<dbReference type="Proteomes" id="UP000005640">
    <property type="component" value="Chromosome 10"/>
</dbReference>
<dbReference type="RNAct" id="P45983">
    <property type="molecule type" value="protein"/>
</dbReference>
<dbReference type="Bgee" id="ENSG00000107643">
    <property type="expression patterns" value="Expressed in cortical plate and 183 other cell types or tissues"/>
</dbReference>
<dbReference type="ExpressionAtlas" id="P45983">
    <property type="expression patterns" value="baseline and differential"/>
</dbReference>
<dbReference type="GO" id="GO:0030424">
    <property type="term" value="C:axon"/>
    <property type="evidence" value="ECO:0000250"/>
    <property type="project" value="ARUK-UCL"/>
</dbReference>
<dbReference type="GO" id="GO:0097441">
    <property type="term" value="C:basal dendrite"/>
    <property type="evidence" value="ECO:0000250"/>
    <property type="project" value="ARUK-UCL"/>
</dbReference>
<dbReference type="GO" id="GO:0005737">
    <property type="term" value="C:cytoplasm"/>
    <property type="evidence" value="ECO:0000250"/>
    <property type="project" value="UniProt"/>
</dbReference>
<dbReference type="GO" id="GO:0005829">
    <property type="term" value="C:cytosol"/>
    <property type="evidence" value="ECO:0000304"/>
    <property type="project" value="Reactome"/>
</dbReference>
<dbReference type="GO" id="GO:0005654">
    <property type="term" value="C:nucleoplasm"/>
    <property type="evidence" value="ECO:0000314"/>
    <property type="project" value="HPA"/>
</dbReference>
<dbReference type="GO" id="GO:0005634">
    <property type="term" value="C:nucleus"/>
    <property type="evidence" value="ECO:0000314"/>
    <property type="project" value="UniProtKB"/>
</dbReference>
<dbReference type="GO" id="GO:0045202">
    <property type="term" value="C:synapse"/>
    <property type="evidence" value="ECO:0000250"/>
    <property type="project" value="UniProtKB"/>
</dbReference>
<dbReference type="GO" id="GO:0005524">
    <property type="term" value="F:ATP binding"/>
    <property type="evidence" value="ECO:0007669"/>
    <property type="project" value="UniProtKB-KW"/>
</dbReference>
<dbReference type="GO" id="GO:0019899">
    <property type="term" value="F:enzyme binding"/>
    <property type="evidence" value="ECO:0000353"/>
    <property type="project" value="BHF-UCL"/>
</dbReference>
<dbReference type="GO" id="GO:0042826">
    <property type="term" value="F:histone deacetylase binding"/>
    <property type="evidence" value="ECO:0000353"/>
    <property type="project" value="BHF-UCL"/>
</dbReference>
<dbReference type="GO" id="GO:0035033">
    <property type="term" value="F:histone deacetylase regulator activity"/>
    <property type="evidence" value="ECO:0000315"/>
    <property type="project" value="BHF-UCL"/>
</dbReference>
<dbReference type="GO" id="GO:0004705">
    <property type="term" value="F:JUN kinase activity"/>
    <property type="evidence" value="ECO:0000314"/>
    <property type="project" value="UniProtKB"/>
</dbReference>
<dbReference type="GO" id="GO:0019903">
    <property type="term" value="F:protein phosphatase binding"/>
    <property type="evidence" value="ECO:0000353"/>
    <property type="project" value="UniProtKB"/>
</dbReference>
<dbReference type="GO" id="GO:0106310">
    <property type="term" value="F:protein serine kinase activity"/>
    <property type="evidence" value="ECO:0007669"/>
    <property type="project" value="RHEA"/>
</dbReference>
<dbReference type="GO" id="GO:0004674">
    <property type="term" value="F:protein serine/threonine kinase activity"/>
    <property type="evidence" value="ECO:0000314"/>
    <property type="project" value="UniProtKB"/>
</dbReference>
<dbReference type="GO" id="GO:0120283">
    <property type="term" value="F:protein serine/threonine kinase binding"/>
    <property type="evidence" value="ECO:0000353"/>
    <property type="project" value="UniProtKB"/>
</dbReference>
<dbReference type="GO" id="GO:0034198">
    <property type="term" value="P:cellular response to amino acid starvation"/>
    <property type="evidence" value="ECO:0000314"/>
    <property type="project" value="CAFA"/>
</dbReference>
<dbReference type="GO" id="GO:0071222">
    <property type="term" value="P:cellular response to lipopolysaccharide"/>
    <property type="evidence" value="ECO:0000314"/>
    <property type="project" value="MGI"/>
</dbReference>
<dbReference type="GO" id="GO:0071260">
    <property type="term" value="P:cellular response to mechanical stimulus"/>
    <property type="evidence" value="ECO:0000270"/>
    <property type="project" value="UniProtKB"/>
</dbReference>
<dbReference type="GO" id="GO:0034599">
    <property type="term" value="P:cellular response to oxidative stress"/>
    <property type="evidence" value="ECO:0000314"/>
    <property type="project" value="UniProtKB"/>
</dbReference>
<dbReference type="GO" id="GO:0034614">
    <property type="term" value="P:cellular response to reactive oxygen species"/>
    <property type="evidence" value="ECO:0000314"/>
    <property type="project" value="UniProt"/>
</dbReference>
<dbReference type="GO" id="GO:0090398">
    <property type="term" value="P:cellular senescence"/>
    <property type="evidence" value="ECO:0000304"/>
    <property type="project" value="Reactome"/>
</dbReference>
<dbReference type="GO" id="GO:0097009">
    <property type="term" value="P:energy homeostasis"/>
    <property type="evidence" value="ECO:0000250"/>
    <property type="project" value="UniProt"/>
</dbReference>
<dbReference type="GO" id="GO:0038095">
    <property type="term" value="P:Fc-epsilon receptor signaling pathway"/>
    <property type="evidence" value="ECO:0000304"/>
    <property type="project" value="Reactome"/>
</dbReference>
<dbReference type="GO" id="GO:0007254">
    <property type="term" value="P:JNK cascade"/>
    <property type="evidence" value="ECO:0000314"/>
    <property type="project" value="UniProtKB"/>
</dbReference>
<dbReference type="GO" id="GO:0007258">
    <property type="term" value="P:JUN phosphorylation"/>
    <property type="evidence" value="ECO:0000314"/>
    <property type="project" value="UniProtKB"/>
</dbReference>
<dbReference type="GO" id="GO:0000165">
    <property type="term" value="P:MAPK cascade"/>
    <property type="evidence" value="ECO:0000314"/>
    <property type="project" value="BHF-UCL"/>
</dbReference>
<dbReference type="GO" id="GO:0043066">
    <property type="term" value="P:negative regulation of apoptotic process"/>
    <property type="evidence" value="ECO:0000314"/>
    <property type="project" value="UniProtKB"/>
</dbReference>
<dbReference type="GO" id="GO:0032091">
    <property type="term" value="P:negative regulation of protein binding"/>
    <property type="evidence" value="ECO:0000314"/>
    <property type="project" value="UniProtKB"/>
</dbReference>
<dbReference type="GO" id="GO:0018105">
    <property type="term" value="P:peptidyl-serine phosphorylation"/>
    <property type="evidence" value="ECO:0000314"/>
    <property type="project" value="UniProtKB"/>
</dbReference>
<dbReference type="GO" id="GO:0018107">
    <property type="term" value="P:peptidyl-threonine phosphorylation"/>
    <property type="evidence" value="ECO:0000314"/>
    <property type="project" value="UniProtKB"/>
</dbReference>
<dbReference type="GO" id="GO:0043065">
    <property type="term" value="P:positive regulation of apoptotic process"/>
    <property type="evidence" value="ECO:0000318"/>
    <property type="project" value="GO_Central"/>
</dbReference>
<dbReference type="GO" id="GO:0031343">
    <property type="term" value="P:positive regulation of cell killing"/>
    <property type="evidence" value="ECO:0000304"/>
    <property type="project" value="Reactome"/>
</dbReference>
<dbReference type="GO" id="GO:0031281">
    <property type="term" value="P:positive regulation of cyclase activity"/>
    <property type="evidence" value="ECO:0000315"/>
    <property type="project" value="CACAO"/>
</dbReference>
<dbReference type="GO" id="GO:1903749">
    <property type="term" value="P:positive regulation of establishment of protein localization to mitochondrion"/>
    <property type="evidence" value="ECO:0000304"/>
    <property type="project" value="Reactome"/>
</dbReference>
<dbReference type="GO" id="GO:0010628">
    <property type="term" value="P:positive regulation of gene expression"/>
    <property type="evidence" value="ECO:0000315"/>
    <property type="project" value="BHF-UCL"/>
</dbReference>
<dbReference type="GO" id="GO:1900227">
    <property type="term" value="P:positive regulation of NLRP3 inflammasome complex assembly"/>
    <property type="evidence" value="ECO:0000314"/>
    <property type="project" value="UniProtKB"/>
</dbReference>
<dbReference type="GO" id="GO:0051247">
    <property type="term" value="P:positive regulation of protein metabolic process"/>
    <property type="evidence" value="ECO:0000315"/>
    <property type="project" value="CACAO"/>
</dbReference>
<dbReference type="GO" id="GO:0006468">
    <property type="term" value="P:protein phosphorylation"/>
    <property type="evidence" value="ECO:0000315"/>
    <property type="project" value="UniProtKB"/>
</dbReference>
<dbReference type="GO" id="GO:0042752">
    <property type="term" value="P:regulation of circadian rhythm"/>
    <property type="evidence" value="ECO:0000250"/>
    <property type="project" value="UniProtKB"/>
</dbReference>
<dbReference type="GO" id="GO:0016241">
    <property type="term" value="P:regulation of macroautophagy"/>
    <property type="evidence" value="ECO:0000304"/>
    <property type="project" value="ParkinsonsUK-UCL"/>
</dbReference>
<dbReference type="GO" id="GO:0032880">
    <property type="term" value="P:regulation of protein localization"/>
    <property type="evidence" value="ECO:0000314"/>
    <property type="project" value="BHF-UCL"/>
</dbReference>
<dbReference type="GO" id="GO:0009612">
    <property type="term" value="P:response to mechanical stimulus"/>
    <property type="evidence" value="ECO:0000318"/>
    <property type="project" value="GO_Central"/>
</dbReference>
<dbReference type="GO" id="GO:0006979">
    <property type="term" value="P:response to oxidative stress"/>
    <property type="evidence" value="ECO:0000314"/>
    <property type="project" value="UniProtKB"/>
</dbReference>
<dbReference type="GO" id="GO:0009411">
    <property type="term" value="P:response to UV"/>
    <property type="evidence" value="ECO:0000314"/>
    <property type="project" value="MGI"/>
</dbReference>
<dbReference type="GO" id="GO:0048511">
    <property type="term" value="P:rhythmic process"/>
    <property type="evidence" value="ECO:0007669"/>
    <property type="project" value="UniProtKB-KW"/>
</dbReference>
<dbReference type="GO" id="GO:0051403">
    <property type="term" value="P:stress-activated MAPK cascade"/>
    <property type="evidence" value="ECO:0000314"/>
    <property type="project" value="CAFA"/>
</dbReference>
<dbReference type="CDD" id="cd07850">
    <property type="entry name" value="STKc_JNK"/>
    <property type="match status" value="1"/>
</dbReference>
<dbReference type="FunFam" id="1.10.510.10:FF:000009">
    <property type="entry name" value="Mitogen-activated protein kinase"/>
    <property type="match status" value="1"/>
</dbReference>
<dbReference type="FunFam" id="3.30.200.20:FF:000210">
    <property type="entry name" value="Mitogen-activated protein kinase"/>
    <property type="match status" value="1"/>
</dbReference>
<dbReference type="Gene3D" id="3.30.200.20">
    <property type="entry name" value="Phosphorylase Kinase, domain 1"/>
    <property type="match status" value="1"/>
</dbReference>
<dbReference type="Gene3D" id="1.10.510.10">
    <property type="entry name" value="Transferase(Phosphotransferase) domain 1"/>
    <property type="match status" value="1"/>
</dbReference>
<dbReference type="IDEAL" id="IID00270"/>
<dbReference type="InterPro" id="IPR011009">
    <property type="entry name" value="Kinase-like_dom_sf"/>
</dbReference>
<dbReference type="InterPro" id="IPR050117">
    <property type="entry name" value="MAP_kinase"/>
</dbReference>
<dbReference type="InterPro" id="IPR003527">
    <property type="entry name" value="MAP_kinase_CS"/>
</dbReference>
<dbReference type="InterPro" id="IPR008351">
    <property type="entry name" value="MAPK_JNK"/>
</dbReference>
<dbReference type="InterPro" id="IPR000719">
    <property type="entry name" value="Prot_kinase_dom"/>
</dbReference>
<dbReference type="InterPro" id="IPR008271">
    <property type="entry name" value="Ser/Thr_kinase_AS"/>
</dbReference>
<dbReference type="PANTHER" id="PTHR24055">
    <property type="entry name" value="MITOGEN-ACTIVATED PROTEIN KINASE"/>
    <property type="match status" value="1"/>
</dbReference>
<dbReference type="Pfam" id="PF00069">
    <property type="entry name" value="Pkinase"/>
    <property type="match status" value="1"/>
</dbReference>
<dbReference type="PRINTS" id="PR01772">
    <property type="entry name" value="JNKMAPKINASE"/>
</dbReference>
<dbReference type="SMART" id="SM00220">
    <property type="entry name" value="S_TKc"/>
    <property type="match status" value="1"/>
</dbReference>
<dbReference type="SUPFAM" id="SSF56112">
    <property type="entry name" value="Protein kinase-like (PK-like)"/>
    <property type="match status" value="1"/>
</dbReference>
<dbReference type="PROSITE" id="PS01351">
    <property type="entry name" value="MAPK"/>
    <property type="match status" value="1"/>
</dbReference>
<dbReference type="PROSITE" id="PS50011">
    <property type="entry name" value="PROTEIN_KINASE_DOM"/>
    <property type="match status" value="1"/>
</dbReference>
<dbReference type="PROSITE" id="PS00108">
    <property type="entry name" value="PROTEIN_KINASE_ST"/>
    <property type="match status" value="1"/>
</dbReference>
<name>MK08_HUMAN</name>
<sequence>MSRSKRDNNFYSVEIGDSTFTVLKRYQNLKPIGSGAQGIVCAAYDAILERNVAIKKLSRPFQNQTHAKRAYRELVLMKCVNHKNIIGLLNVFTPQKSLEEFQDVYIVMELMDANLCQVIQMELDHERMSYLLYQMLCGIKHLHSAGIIHRDLKPSNIVVKSDCTLKILDFGLARTAGTSFMMTPYVVTRYYRAPEVILGMGYKENVDLWSVGCIMGEMVCHKILFPGRDYIDQWNKVIEQLGTPCPEFMKKLQPTVRTYVENRPKYAGYSFEKLFPDVLFPADSEHNKLKASQARDLLSKMLVIDASKRISVDEALQHPYINVWYDPSEAEAPPPKIPDKQLDEREHTIEEWKELIYKEVMDLEERTKNGVIRGQPSPLGAAVINGSQHPSSSSSVNDVSSMSTDPTLASDTDSSLEAAAGPLGCCR</sequence>
<proteinExistence type="evidence at protein level"/>